<name>CPXB_PRIM2</name>
<sequence>MTIKEMPQPKTFGELKNLPLLNTDKPVQALMKIADELGEIFKFEAPGRVTRYLSSQRLIKEACDESRFDKNLSQALKFVRDFAGDGLFTSWTHEKNWKKAHNILLPSFSQQAMKGYHAMMVDIAVQLVQKWERLNADEHIEVPEDMTRLTLDTIGLCGFNYRFNSFYRDQPHPFITSMVRALDEAMNKLQRANPDDPAYDENKRQFQEDIKVMNDLVDKIIADRKASGEQSDDLLTHMLNGKDPETGEPLDDENIRYQIITFLIAGHETTSGLLSFALYFLVKNPHVLQKAAEEAARVLVDPVPSYKQVKQLKYVGMVLNEALRLWPTAPAFSLYAKEDTVLGGEYPLEKGDELMVLIPQLHRDKTIWGDDVEEFRPERFENPSAIPQHAFKPFGNGQRACIGQQFALHEATLVLGMMLKHFDFEDHTNYELDIKETLTLKPEGFVVKAKSKKIPLGGIPSPSTEQSAKKVRKKAENAHNTPLLVLYGSNMGTAEGTARDLADIAMSKGFAPQVATLDSHAGNLPREGAVLIVTASYNGHPPDNAKQFVDWLDQASADEVKGVRYSVFGCGDKNWATTYQKVPAFIDETLAAKGAENIADRGEADASDDFEGTYEEWREHMWSDVAAYFNLDIENSEDNKSTLSLQFVDSAADMPLAKMHGAFSTNVVASKELQQPGSARSTRHLEIELPKEASYQEGDHLGVIPRNYEGIVNRVTARFGLDASQQIRLEAEEEKLAHLPLAKTVSVEELLQYVELQDPVTRTQLRAMAAKTVCPPHKVELEALLEKQAYKEQVLAKRLTMLELLEKYPACEMKFSEFIALLPSIRPRYYSISSSPRVDEKQASITVSVVSGEAWSGYGEYKGIASNYLAELQEGDTITCFISTPQSEFTLPKDPETPLIMVGPGTGVAPFRGFVQARKQLKEQGQSLGEAHLYFGCRSPHEDYLYQEELENAQSEGIITLHTAFSRMPNQPKTYVQHVMEQDGKKLIELLDQGAHFYICGDGSQMAPAVEATLMKSYADVHQVSEADARLWLQQLEEKGRYAKDVWAG</sequence>
<keyword id="KW-0002">3D-structure</keyword>
<keyword id="KW-0963">Cytoplasm</keyword>
<keyword id="KW-0249">Electron transport</keyword>
<keyword id="KW-0274">FAD</keyword>
<keyword id="KW-0285">Flavoprotein</keyword>
<keyword id="KW-0288">FMN</keyword>
<keyword id="KW-0349">Heme</keyword>
<keyword id="KW-0408">Iron</keyword>
<keyword id="KW-0479">Metal-binding</keyword>
<keyword id="KW-0503">Monooxygenase</keyword>
<keyword id="KW-0511">Multifunctional enzyme</keyword>
<keyword id="KW-0521">NADP</keyword>
<keyword id="KW-0560">Oxidoreductase</keyword>
<keyword id="KW-0813">Transport</keyword>
<comment type="function">
    <text evidence="6 7 11 12 13 14 16 17 18 19 20 21 22 23 25 26 27 28">Functions as a fatty acid monooxygenase (PubMed:11695892, PubMed:14653735, PubMed:16403573, PubMed:16566047, PubMed:17077084, PubMed:1727637, PubMed:17868686, PubMed:18004886, PubMed:18298086, PubMed:18619466, PubMed:18721129, PubMed:19492389, PubMed:20180779, PubMed:21110374, PubMed:21875028, PubMed:3106359, PubMed:7578081). Catalyzes hydroxylation of fatty acids at omega-1, omega-2 and omega-3 positions (PubMed:1727637, PubMed:21875028). Shows activity toward medium and long-chain fatty acids, with optimum chain lengths of 12, 14 and 16 carbons (lauric, myristic, and palmitic acids). Able to metabolize some of these primary metabolites to secondary and tertiary products (PubMed:1727637). Marginal activity towards short chain lengths of 8-10 carbons (PubMed:1727637, PubMed:18619466). Hydroxylates highly branched fatty acids, which play an essential role in membrane fluidity regulation (PubMed:16566047). Also displays a NADPH-dependent reductase activity in the C-terminal domain, which allows electron transfer from NADPH to the heme iron of the cytochrome P450 N-terminal domain (PubMed:11695892, PubMed:14653735, PubMed:16403573, PubMed:16566047, PubMed:17077084, PubMed:1727637, PubMed:17868686, PubMed:18004886, PubMed:18298086, PubMed:18619466, PubMed:18721129, PubMed:19492389, PubMed:20180779, PubMed:21110374, PubMed:21875028, PubMed:3106359, PubMed:7578081). Involved in inactivation of quorum sensing signals of other competing bacteria by oxidazing efficiently acyl homoserine lactones (AHLs), molecules involved in quorum sensing signaling pathways, and their lactonolysis products acyl homoserines (AHs) (PubMed:18020460).</text>
</comment>
<comment type="catalytic activity">
    <reaction evidence="5 6 7 11 12 13 14 16 17 18 19 20 21 22 23 25 26 27 28">
        <text>2 oxidized [cytochrome P450] + NADPH = 2 reduced [cytochrome P450] + NADP(+) + H(+)</text>
        <dbReference type="Rhea" id="RHEA:24040"/>
        <dbReference type="Rhea" id="RHEA-COMP:14627"/>
        <dbReference type="Rhea" id="RHEA-COMP:14628"/>
        <dbReference type="ChEBI" id="CHEBI:15378"/>
        <dbReference type="ChEBI" id="CHEBI:55376"/>
        <dbReference type="ChEBI" id="CHEBI:57783"/>
        <dbReference type="ChEBI" id="CHEBI:58349"/>
        <dbReference type="ChEBI" id="CHEBI:60344"/>
        <dbReference type="EC" id="1.6.2.4"/>
    </reaction>
</comment>
<comment type="catalytic activity">
    <reaction evidence="5 6 7 11 12 13 14 16 17 18 19 20 21 22 23 25 26 27 28">
        <text>an organic molecule + reduced [NADPH--hemoprotein reductase] + O2 = an alcohol + oxidized [NADPH--hemoprotein reductase] + H2O + H(+)</text>
        <dbReference type="Rhea" id="RHEA:17149"/>
        <dbReference type="Rhea" id="RHEA-COMP:11964"/>
        <dbReference type="Rhea" id="RHEA-COMP:11965"/>
        <dbReference type="ChEBI" id="CHEBI:15377"/>
        <dbReference type="ChEBI" id="CHEBI:15378"/>
        <dbReference type="ChEBI" id="CHEBI:15379"/>
        <dbReference type="ChEBI" id="CHEBI:30879"/>
        <dbReference type="ChEBI" id="CHEBI:57618"/>
        <dbReference type="ChEBI" id="CHEBI:58210"/>
        <dbReference type="ChEBI" id="CHEBI:142491"/>
        <dbReference type="EC" id="1.14.14.1"/>
    </reaction>
</comment>
<comment type="cofactor">
    <cofactor evidence="28">
        <name>FAD</name>
        <dbReference type="ChEBI" id="CHEBI:57692"/>
    </cofactor>
</comment>
<comment type="cofactor">
    <cofactor evidence="4">
        <name>FMN</name>
        <dbReference type="ChEBI" id="CHEBI:58210"/>
    </cofactor>
</comment>
<comment type="cofactor">
    <cofactor evidence="11 21 22 23 25">
        <name>heme</name>
        <dbReference type="ChEBI" id="CHEBI:30413"/>
    </cofactor>
</comment>
<comment type="activity regulation">
    <text evidence="19">Inhibited by N-(12-imidazolyl-dodecanoyl)-L-leucine.</text>
</comment>
<comment type="biophysicochemical properties">
    <kinetics>
        <KM evidence="18">250 uM for lauric acid at pH 7.4 at room temperature</KM>
        <KM evidence="18">34 uM for N-beta-oxolauroyl-DL-homoserine lactone</KM>
        <KM evidence="18">210 uM for N-beta-oxolauroyl-DL-homoserine</KM>
        <KM evidence="18">140 uM for N-lauroyl-DL-homoserine</KM>
        <KM evidence="11">322 uM for lauric acid at pH 7.5 and 15 degrees Celsius</KM>
        <KM evidence="16">265 uM for lauric acid</KM>
        <KM evidence="16">16 mM for indole</KM>
        <KM evidence="21">87.4 uM for laurate/dodecanoate at pH 7.0 and 25 degrees Celsius</KM>
        <KM evidence="22">230 uM for lauric acid at pH 7.4</KM>
        <KM evidence="23">87.4 uM for laurate/dodecanoate at 25 degrees Celsius</KM>
        <KM evidence="23">5.1 uM for arachidonate at 25 degrees Celsius</KM>
        <KM evidence="25">42.4 uM for palmitic acid at pH 7.4 and 30 degrees Celsius</KM>
        <text evidence="11 16 17 21 22 23 25">kcat is 84.1 sec(-1) for lauric acid (PubMed:16403573). kcat is 1480 min(-1) for palmitic acid. kcat is 1880 min(-1) for N-palmitoylglycine. kcat is 1690 min(-1) for N-palmitoyl-L-methionine. kcat is 610 min(-1) for N-palmitoyl-L-glutamine. kcat is 485 min(-1) for N-palmitoyl-L-glutamic acid. kcat is 1160 min(-1) for N-palmitoyl-L-leucine (PubMed:18004886). kcat is 28 sec(-1) for lauric acid (PubMed:17868686). kcat is 2770 min(-1) for laurate/dodecanoate (PubMed:18721129, PubMed:20180779). kcat is 77 for lauric acid (PubMed:19492389). kcat is 16400 min(-1) for arachidonate (PubMed:20180779). kcat is 91.4 for palmitic acid (PubMed:21110374).</text>
    </kinetics>
</comment>
<comment type="interaction">
    <interactant intactId="EBI-7701704">
        <id>P14779</id>
    </interactant>
    <interactant intactId="EBI-7701704">
        <id>P14779</id>
        <label>cyp102A1</label>
    </interactant>
    <organismsDiffer>false</organismsDiffer>
    <experiments>2</experiments>
</comment>
<comment type="subcellular location">
    <subcellularLocation>
        <location evidence="1">Cytoplasm</location>
    </subcellularLocation>
</comment>
<comment type="induction">
    <text evidence="10 27">By pentobarbital (PubMed:1544926, PubMed:3106359). Expression is negatively regulated by repressor bm3R1 at the transcriptional level (PubMed:1544926).</text>
</comment>
<comment type="biotechnology">
    <text evidence="20 22 25 38">This protein is a target of protein engineering. Its selectivity-directing and activity-enhancing mutations have been extensively studied and the designed mutations allow this enzyme to act on non-native substrates and/or in order to enhance production of synthetically desirable end-products.</text>
</comment>
<comment type="similarity">
    <text evidence="38">In the N-terminal section; belongs to the cytochrome P450 family.</text>
</comment>
<reference key="1">
    <citation type="journal article" date="1989" name="J. Biol. Chem.">
        <title>Coding nucleotide, 5' regulatory, and deduced amino acid sequences of P-450BM-3, a single peptide cytochrome P-450:NADPH-P-450 reductase from Bacillus megaterium.</title>
        <authorList>
            <person name="Ruettinger R.T."/>
            <person name="Wen L.-P."/>
            <person name="Fulco A.J."/>
        </authorList>
    </citation>
    <scope>NUCLEOTIDE SEQUENCE [GENOMIC DNA]</scope>
    <source>
        <strain evidence="35">ATCC 14581 / DSM 32 / CCUG 1817 / JCM 2506 / NBRC 15308 / NCIMB 9376 / NCTC 10342 / NRRL B-14308 / VKM B-512 / Ford 19</strain>
    </source>
</reference>
<reference evidence="42 43" key="2">
    <citation type="journal article" date="2015" name="Genome Announc.">
        <title>Complete genome sequences for 35 biothreat assay-relevant bacillus species.</title>
        <authorList>
            <person name="Johnson S.L."/>
            <person name="Daligault H.E."/>
            <person name="Davenport K.W."/>
            <person name="Jaissle J."/>
            <person name="Frey K.G."/>
            <person name="Ladner J.T."/>
            <person name="Broomall S.M."/>
            <person name="Bishop-Lilly K.A."/>
            <person name="Bruce D.C."/>
            <person name="Gibbons H.S."/>
            <person name="Coyne S.R."/>
            <person name="Lo C.C."/>
            <person name="Meincke L."/>
            <person name="Munk A.C."/>
            <person name="Koroleva G.I."/>
            <person name="Rosenzweig C.N."/>
            <person name="Palacios G.F."/>
            <person name="Redden C.L."/>
            <person name="Minogue T.D."/>
            <person name="Chain P.S."/>
        </authorList>
    </citation>
    <scope>NUCLEOTIDE SEQUENCE [LARGE SCALE GENOMIC DNA]</scope>
    <source>
        <strain evidence="42">ATCC 14581 / DSM 32 / CCUG 1817 / JCM 2506 / NBRC 15308 / NCIMB 9376 / NCTC 10342 / NRRL B-14308 / VKM B-512 / Ford 19</strain>
    </source>
</reference>
<reference evidence="41" key="3">
    <citation type="journal article" date="1992" name="J. Biol. Chem.">
        <title>Barbiturate-mediated regulation of expression of the cytochrome P450BM-3 gene of Bacillus megaterium by Bm3R1 protein.</title>
        <authorList>
            <person name="Shaw G.C."/>
            <person name="Fulco A.J."/>
        </authorList>
    </citation>
    <scope>NUCLEOTIDE SEQUENCE [GENOMIC DNA] OF 1-29</scope>
    <scope>INDUCTION</scope>
    <source>
        <strain evidence="34">ATCC 14581 / DSM 32 / CCUG 1817 / JCM 2506 / NBRC 15308 / NCIMB 9376 / NCTC 10342 / NRRL B-14308 / VKM B-512 / Ford 19</strain>
    </source>
</reference>
<reference key="4">
    <citation type="journal article" date="1987" name="J. Biol. Chem.">
        <title>Cloning of the gene encoding a catalytically self-sufficient cytochrome P-450 fatty acid monooxygenase induced by barbiturates in Bacillus megaterium and its functional expression and regulation in heterologous (Escherichia coli) and homologous (Bacillus megaterium) hosts.</title>
        <authorList>
            <person name="Wen L.P."/>
            <person name="Fulco A.J."/>
        </authorList>
    </citation>
    <scope>FUNCTION</scope>
    <scope>CATALYTIC ACTIVITY</scope>
    <scope>INDUCTION</scope>
    <source>
        <strain evidence="36">ATCC 14581 / DSM 32 / CCUG 1817 / JCM 2506 / NBRC 15308 / NCIMB 9376 / NCTC 10342 / NRRL B-14308 / VKM B-512 / Ford 19</strain>
    </source>
</reference>
<reference key="5">
    <citation type="journal article" date="1992" name="Arch. Biochem. Biophys.">
        <title>Fatty acid monooxygenation by P450BM-3: product identification and proposed mechanisms for the sequential hydroxylation reactions.</title>
        <authorList>
            <person name="Boddupalli S.S."/>
            <person name="Pramanik B.C."/>
            <person name="Slaughter C.A."/>
            <person name="Estabrook R.W."/>
            <person name="Peterson J.A."/>
        </authorList>
    </citation>
    <scope>FUNCTION</scope>
    <scope>CATALYTIC ACTIVITY</scope>
    <scope>SUBSTRATE SPECIFICITY</scope>
</reference>
<reference key="6">
    <citation type="journal article" date="2006" name="ChemBioChem">
        <title>Selective hydroxylation of highly branched fatty acids and their derivatives by CYP102A1 from Bacillus megaterium.</title>
        <authorList>
            <person name="Budde M."/>
            <person name="Morr M."/>
            <person name="Schmid R.D."/>
            <person name="Urlacher V.B."/>
        </authorList>
    </citation>
    <scope>FUNCTION</scope>
    <scope>CATALYTIC ACTIVITY</scope>
    <scope>MUTAGENESIS OF ALA-75; PHE-88 AND LEU-189</scope>
</reference>
<reference key="7">
    <citation type="journal article" date="2007" name="Biochemistry">
        <title>Bacillus megaterium CYP102A1 oxidation of acyl homoserine lactones and acyl homoserines.</title>
        <authorList>
            <person name="Chowdhary P.K."/>
            <person name="Keshavan N."/>
            <person name="Nguyen H.Q."/>
            <person name="Peterson J.A."/>
            <person name="Gonzalez J.E."/>
            <person name="Haines D.C."/>
        </authorList>
    </citation>
    <scope>FUNCTION</scope>
    <scope>CATALYTIC ACTIVITY</scope>
    <scope>BIOPHYSICOCHEMICAL PROPERTIES</scope>
</reference>
<reference evidence="61" key="8">
    <citation type="journal article" date="1993" name="Science">
        <title>Crystal structure of hemoprotein domain of P450BM-3, a prototype for microsomal P450's.</title>
        <authorList>
            <person name="Ravichandran K.G."/>
            <person name="Boddupalli S.S."/>
            <person name="Hasemann C.A."/>
            <person name="Peterson J.A."/>
            <person name="Deisenhofer J."/>
        </authorList>
    </citation>
    <scope>X-RAY CRYSTALLOGRAPHY (2.0 ANGSTROMS) OF 2-472 IN COMPLEX WITH HEME</scope>
</reference>
<reference evidence="60" key="9">
    <citation type="journal article" date="1995" name="Acta Crystallogr. D">
        <title>Modeling protein-substrate interactions in the heme domain of cytochrome P450(BM-3).</title>
        <authorList>
            <person name="Li H."/>
            <person name="Poulos T.L."/>
        </authorList>
    </citation>
    <scope>X-RAY CRYSTALLOGRAPHY (2.0 ANGSTROMS) OF 2-456 IN COMPLEX WITH HEME</scope>
</reference>
<reference evidence="47" key="10">
    <citation type="journal article" date="1995" name="Biochemistry">
        <title>The role of Thr268 in oxygen activation of cytochrome P450BM-3.</title>
        <authorList>
            <person name="Yeom H."/>
            <person name="Sligar S.G."/>
            <person name="Li H."/>
            <person name="Poulos T.L."/>
            <person name="Fulco A.J."/>
        </authorList>
    </citation>
    <scope>X-RAY CRYSTALLOGRAPHY (2.3 ANGSTROMS) OF 2-472 OF MUTANT ALA-269 IN COMPLEX WITH HEME</scope>
    <scope>CATALYTIC ACTIVITY</scope>
    <scope>COFACTOR</scope>
    <scope>SITE</scope>
    <scope>MUTAGENESIS OF THR-269</scope>
</reference>
<reference evidence="46" key="11">
    <citation type="journal article" date="1997" name="Nat. Struct. Biol.">
        <title>The structure of the cytochrome p450BM-3 haem domain complexed with the fatty acid substrate, palmitoleic acid.</title>
        <authorList>
            <person name="Li H.Y."/>
            <person name="Poulos T.L."/>
        </authorList>
    </citation>
    <scope>X-RAY CRYSTALLOGRAPHY (2.7 ANGSTROMS) OF 2-472 IN COMPLEX WITH HEME AND PALMITOLEIC ACID</scope>
</reference>
<reference evidence="44 45" key="12">
    <citation type="journal article" date="1999" name="Proc. Natl. Acad. Sci. U.S.A.">
        <title>Structure of a cytochrome P450-redox partner electron-transfer complex.</title>
        <authorList>
            <person name="Sevrioukova I.F."/>
            <person name="Li H."/>
            <person name="Zhang H."/>
            <person name="Peterson J.A."/>
            <person name="Poulos T.L."/>
        </authorList>
    </citation>
    <scope>X-RAY CRYSTALLOGRAPHY (2.03 ANGSTROMS) OF 2-650 IN COMPLEX WITH FMN AND HEME</scope>
</reference>
<reference evidence="48" key="13">
    <citation type="journal article" date="2001" name="Biochemistry">
        <title>Structural and spectroscopic analysis of the F393H mutant of flavocytochrome P450 BM3.</title>
        <authorList>
            <person name="Ost T.W."/>
            <person name="Munro A.W."/>
            <person name="Mowat C.G."/>
            <person name="Taylor P.R."/>
            <person name="Pesseguiero A."/>
            <person name="Fulco A.J."/>
            <person name="Cho A.K."/>
            <person name="Cheesman M.A."/>
            <person name="Walkinshaw M.D."/>
            <person name="Chapman S.K."/>
        </authorList>
    </citation>
    <scope>X-RAY CRYSTALLOGRAPHY (2.0 ANGSTROMS) OF 2-456 OF MUTANT HIS-394 IN COMPLEX WITH HEME</scope>
    <scope>CATALYTIC ACTIVITY</scope>
    <scope>MUTAGENESIS OF PHE-394</scope>
</reference>
<reference evidence="49" key="14">
    <citation type="journal article" date="2001" name="Biochemistry">
        <title>Pivotal role of water in the mechanism of P450BM-3.</title>
        <authorList>
            <person name="Haines D.C."/>
            <person name="Tomchick D.R."/>
            <person name="Machius M."/>
            <person name="Peterson J.A."/>
        </authorList>
    </citation>
    <scope>X-RAY CRYSTALLOGRAPHY (1.65 ANGSTROMS) OF 1-471 IN COMPLEX WITH HEME AND N-PALMITOYLGLYCINE</scope>
    <scope>FUNCTION</scope>
    <scope>CATALYTIC ACTIVITY</scope>
</reference>
<reference evidence="50 51 52" key="15">
    <citation type="journal article" date="2003" name="J. Am. Chem. Soc.">
        <title>Oxygen activation and electron transfer in flavocytochrome P450 BM3.</title>
        <authorList>
            <person name="Ost T.W."/>
            <person name="Clark J."/>
            <person name="Mowat C.G."/>
            <person name="Miles C.S."/>
            <person name="Walkinshaw M.D."/>
            <person name="Reid G.A."/>
            <person name="Chapman S.K."/>
            <person name="Daff S."/>
        </authorList>
    </citation>
    <scope>X-RAY CRYSTALLOGRAPHY (2.0 ANGSTROMS) OF 2-456 OF MUTANTS ALA/TRP/TYR-394 IN COMPLEXES WITH HEME</scope>
    <scope>FUNCTION</scope>
    <scope>CATALYTIC ACTIVITY</scope>
    <scope>MUTAGENESIS OF PHE-394</scope>
</reference>
<reference evidence="53 54" key="16">
    <citation type="journal article" date="2004" name="J. Biol. Chem.">
        <title>A single mutation in cytochrome P450 BM3 induces the conformational rearrangement seen upon substrate binding in the wild-type enzyme.</title>
        <authorList>
            <person name="Joyce M.G."/>
            <person name="Girvan H.M."/>
            <person name="Munro A.W."/>
            <person name="Leys D."/>
        </authorList>
    </citation>
    <scope>X-RAY CRYSTALLOGRAPHY (2.0 ANGSTROMS) OF 2-472 OF MUTANT GLU-265 IN COMPLEXES WITH HEME AND PALMITOLEIC ACID</scope>
</reference>
<reference evidence="55 56" key="17">
    <citation type="journal article" date="2006" name="J. Inorg. Biochem.">
        <title>The role of Thr268 and Phe393 in cytochrome P450 BM3.</title>
        <authorList>
            <person name="Clark J.P."/>
            <person name="Miles C.S."/>
            <person name="Mowat C.G."/>
            <person name="Walkinshaw M.D."/>
            <person name="Reid G.A."/>
            <person name="Daff S.N."/>
            <person name="Chapman S.K."/>
        </authorList>
    </citation>
    <scope>X-RAY CRYSTALLOGRAPHY (1.8 ANGSTROMS) OF 2-456 OF MUTANTS ALA/ASN-269 IN COMPLEXES WITH HEME</scope>
    <scope>CATALYTIC ACTIVITY</scope>
    <scope>COFACTOR</scope>
    <scope>BIOPHYSICOCHEMICAL PROPERTIES</scope>
    <scope>ENZYME KINETICS</scope>
    <scope>ABSORPTION SPECTROSCOPY</scope>
    <scope>REDOX POTENTIOMETRY OF HEME</scope>
    <scope>MUTAGENESIS OF THR-269 AND PHE-394</scope>
</reference>
<reference evidence="58" key="18">
    <citation type="journal article" date="2007" name="Biochemistry">
        <title>Interactions of substrates at the surface of P450s can greatly enhance substrate potency.</title>
        <authorList>
            <person name="Hegde A."/>
            <person name="Haines D.C."/>
            <person name="Bondlela M."/>
            <person name="Chen B."/>
            <person name="Schaffer N."/>
            <person name="Tomchick D.R."/>
            <person name="Machius M."/>
            <person name="Nguyen H."/>
            <person name="Chowdhary P.K."/>
            <person name="Stewart L."/>
            <person name="Lopez C."/>
            <person name="Peterson J.A."/>
        </authorList>
    </citation>
    <scope>X-RAY CRYSTALLOGRAPHY (1.7 ANGSTROMS) OF 2-471 IN COMPLEX WITH HEME AND N-PALMITOYL-L-METHIONINE</scope>
    <scope>FUNCTION</scope>
    <scope>CATALYTIC ACTIVITY</scope>
    <scope>BIOPHYSICOCHEMICAL PROPERTIES</scope>
    <scope>MUTAGENESIS OF ARG-48</scope>
</reference>
<reference evidence="65 66" key="19">
    <citation type="journal article" date="2007" name="J. Am. Chem. Soc.">
        <title>Understanding a mechanism of organic cosolvent inactivation in heme monooxygenase P450 BM-3.</title>
        <authorList>
            <person name="Kuper J."/>
            <person name="Wong T.S."/>
            <person name="Roccatano D."/>
            <person name="Wilmanns M."/>
            <person name="Schwaneberg U."/>
        </authorList>
    </citation>
    <scope>X-RAY CRYSTALLOGRAPHY (1.7 ANGSTROMS) OF 2-456 IN COMPLEXES WITH HEME</scope>
</reference>
<reference evidence="62 63 64" key="20">
    <citation type="journal article" date="2007" name="J. Biol. Chem.">
        <title>Structural and spectroscopic characterization of P450 BM3 mutants with unprecedented P450 heme iron ligand sets. New heme ligation states influence conformational equilibria in P450 BM3.</title>
        <authorList>
            <person name="Girvan H.M."/>
            <person name="Seward H.E."/>
            <person name="Toogood H.S."/>
            <person name="Cheesman M.R."/>
            <person name="Leys D."/>
            <person name="Munro A.W."/>
        </authorList>
    </citation>
    <scope>X-RAY CRYSTALLOGRAPHY (1.2 ANGSTROMS) OF 2-471 OF WILD-TYPE AND MUTANTS HIS/LYS-265 IN COMPLEXES WITH HEME</scope>
    <scope>FUNCTION</scope>
    <scope>CATALYTIC ACTIVITY</scope>
    <scope>MUTAGENESIS OF ALA-265</scope>
</reference>
<reference evidence="67" key="21">
    <citation type="journal article" date="2007" name="J. Mol. Biol.">
        <title>Filling a hole in cytochrome P450 BM3 improves substrate binding and catalytic efficiency.</title>
        <authorList>
            <person name="Huang W.C."/>
            <person name="Westlake A.C."/>
            <person name="Marechal J.D."/>
            <person name="Joyce M.G."/>
            <person name="Moody P.C."/>
            <person name="Roberts G.C."/>
        </authorList>
    </citation>
    <scope>X-RAY CRYSTALLOGRAPHY (2.8 ANGSTROMS) OF 2-459 OF MUTANT PHE-83 IN COMPLEX WITH HEME AND PALMITIC ACID</scope>
    <scope>FUNCTION</scope>
    <scope>CATALYTIC ACTIVITY</scope>
    <scope>BIOPHYSICOCHEMICAL PROPERTIES</scope>
    <scope>ENZYME KINETICS</scope>
    <scope>MUTAGENESIS OF ALA-83</scope>
</reference>
<reference evidence="68" key="22">
    <citation type="journal article" date="2008" name="Biochemistry">
        <title>Crystal structure of inhibitor-bound P450BM-3 reveals open conformation of substrate access channel.</title>
        <authorList>
            <person name="Haines D.C."/>
            <person name="Chen B."/>
            <person name="Tomchick D.R."/>
            <person name="Bondlela M."/>
            <person name="Hegde A."/>
            <person name="Machius M."/>
            <person name="Peterson J.A."/>
        </authorList>
    </citation>
    <scope>X-RAY CRYSTALLOGRAPHY (1.6 ANGSTROMS) OF 1-470 IN COMPLEX WITH HEME AND SUBSTRATE INHIBITOR</scope>
    <scope>FUNCTION</scope>
    <scope>CATALYTIC ACTIVITY</scope>
    <scope>ACTIVITY REGULATION</scope>
</reference>
<reference evidence="69" key="23">
    <citation type="journal article" date="2008" name="J. Mol. Biol.">
        <title>Evolutionary history of a specialized p450 propane monooxygenase.</title>
        <authorList>
            <person name="Fasan R."/>
            <person name="Meharenna Y.T."/>
            <person name="Snow C.D."/>
            <person name="Poulos T.L."/>
            <person name="Arnold F.H."/>
        </authorList>
    </citation>
    <scope>X-RAY CRYSTALLOGRAPHY (2.6 ANGSTROMS) OF 2-456 OF MUTANT ALA-79/TYR-139/ILE-176/ILE-179/VAL-185/GLN-237/GLY-253/SER-256/VAL-291/THR-296/VAL-354 IN COMPLEX WITH HEME AND N-PALMITOYLGLYCINE</scope>
    <scope>FUNCTION</scope>
    <scope>CATALYTIC ACTIVITY</scope>
    <scope>BIOTECHNOLOGY</scope>
</reference>
<reference evidence="70 71 72" key="24">
    <citation type="journal article" date="2009" name="Biochem. J.">
        <title>Novel haem co-ordination variants of flavocytochrome P450BM3.</title>
        <authorList>
            <person name="Girvan H.M."/>
            <person name="Toogood H.S."/>
            <person name="Littleford R.E."/>
            <person name="Seward H.E."/>
            <person name="Smith W.E."/>
            <person name="Ekanem I.S."/>
            <person name="Leys D."/>
            <person name="Cheesman M.R."/>
            <person name="Munro A.W."/>
        </authorList>
    </citation>
    <scope>X-RAY CRYSTALLOGRAPHY (2.1 ANGSTROMS) OF 2-471 OF MUTANTS CYS/MET/GLN-265 IN COMPLEXES WITH HEME AND PALMITOLEIC ACID</scope>
    <scope>FUNCTION</scope>
    <scope>CATALYTIC ACTIVITY</scope>
    <scope>COFACTOR</scope>
    <scope>BIOPHYSICOCHEMICAL PROPERTIES</scope>
    <scope>SPECTROSCOPIC STUDIES</scope>
    <scope>REDOX POTENTIOMETRY OF HEME</scope>
    <scope>MUTAGENESIS OF ALA-265</scope>
</reference>
<reference evidence="73" key="25">
    <citation type="journal article" date="2009" name="ChemBioChem">
        <title>A highly active single-mutation variant of P450BM3 (CYP102A1).</title>
        <authorList>
            <person name="Whitehouse C.J."/>
            <person name="Bell S.G."/>
            <person name="Yang W."/>
            <person name="Yorke J.A."/>
            <person name="Blanford C.F."/>
            <person name="Strong A.J."/>
            <person name="Morse E.J."/>
            <person name="Bartlam M."/>
            <person name="Rao Z."/>
            <person name="Wong L.L."/>
        </authorList>
    </citation>
    <scope>X-RAY CRYSTALLOGRAPHY (2.2 ANGSTROMS) OF 1-482 OF MUTANT PRO-402 IN COMPLEX WITH HEME</scope>
    <scope>FUNCTION</scope>
    <scope>CATALYTIC ACTIVITY</scope>
    <scope>COFACTOR</scope>
    <scope>BIOPHYSICOCHEMICAL PROPERTIES</scope>
    <scope>REDOX POTENTIOMETRY OF HEME</scope>
    <scope>BIOTECHNOLOGY</scope>
    <scope>MUTAGENESIS OF ILE-402</scope>
</reference>
<reference evidence="74 75 76" key="26">
    <citation type="journal article" date="2010" name="Biochem. J.">
        <title>Glutamate-haem ester bond formation is disfavoured in flavocytochrome P450 BM3: characterization of glutamate substitution mutants at the haem site of P450 BM3.</title>
        <authorList>
            <person name="Girvan H.M."/>
            <person name="Levy C.W."/>
            <person name="Williams P."/>
            <person name="Fisher K."/>
            <person name="Cheesman M.R."/>
            <person name="Rigby S.E."/>
            <person name="Leys D."/>
            <person name="Munro A.W."/>
        </authorList>
    </citation>
    <scope>X-RAY CRYSTALLOGRAPHY (1.6 ANGSTROMS) OF 2-471 OF MUTANTS GLU-87; GLU-262 AND GLU-402 IN COMPLEXES WITH HEME AND N-PALMITOYLGLYCINE</scope>
    <scope>FUNCTION</scope>
    <scope>CATALYTIC ACTIVITY</scope>
    <scope>COFACTOR</scope>
    <scope>BIOPHYSICOCHEMICAL PROPERTIES</scope>
    <scope>REDOX POTENTIOMETRY OF HEME</scope>
    <scope>MUTAGENESIS OF LEU-87; PHE-262 AND ILE-402</scope>
</reference>
<reference evidence="77" key="27">
    <citation type="journal article" date="2010" name="ChemBioChem">
        <title>Structural basis for the properties of two single-site proline mutants of CYP102A1 (P450BM3).</title>
        <authorList>
            <person name="Whitehouse C.J."/>
            <person name="Yang W."/>
            <person name="Yorke J.A."/>
            <person name="Rowlatt B.C."/>
            <person name="Strong A.J."/>
            <person name="Blanford C.F."/>
            <person name="Bell S.G."/>
            <person name="Bartlam M."/>
            <person name="Wong L.L."/>
            <person name="Rao Z."/>
        </authorList>
    </citation>
    <scope>X-RAY CRYSTALLOGRAPHY (1.9 ANGSTROMS) OF 1-482 OF MUTANT PRO-331 IN COMPLEX WITH HEME</scope>
    <scope>FUNCTION</scope>
    <scope>CATALYTIC ACTIVITY</scope>
    <scope>COFACTOR</scope>
    <scope>BIOPHYSICOCHEMICAL PROPERTIES</scope>
    <scope>REDOX POTENTIOMETRY OF HEME</scope>
    <scope>BIOTECHNOLOGY</scope>
    <scope>MUTAGENESIS OF ALA-331</scope>
</reference>
<reference evidence="78" key="28">
    <citation type="journal article" date="2010" name="Proc. Natl. Acad. Sci. U.S.A.">
        <title>Photooxidation of cytochrome P450-BM3.</title>
        <authorList>
            <person name="Ener M.E."/>
            <person name="Lee Y.T."/>
            <person name="Winkler J.R."/>
            <person name="Gray H.B."/>
            <person name="Cheruzel L."/>
        </authorList>
    </citation>
    <scope>X-RAY CRYSTALLOGRAPHY (2.4 ANGSTROMS) OF 1-464 OF MUTANT ALA-63/CYS-98/CYS-157 IN COMPLEX WITH HEME</scope>
    <scope>REACTION MECHANISM</scope>
</reference>
<reference evidence="57 59" key="29">
    <citation type="journal article" date="2011" name="Biochemistry">
        <title>A single active-site mutation of P450BM-3 dramatically enhances substrate binding and rate of product formation.</title>
        <authorList>
            <person name="Haines D.C."/>
            <person name="Hegde A."/>
            <person name="Chen B."/>
            <person name="Zhao W."/>
            <person name="Bondlela M."/>
            <person name="Humphreys J.M."/>
            <person name="Mullin D.A."/>
            <person name="Tomchick D.R."/>
            <person name="Machius M."/>
            <person name="Peterson J.A."/>
        </authorList>
    </citation>
    <scope>X-RAY CRYSTALLOGRAPHY (1.4 ANGSTROMS) OF 2-471 IN COMPLEXES WITH HEME AND N-PALMITOYLGLYCINE</scope>
    <scope>FUNCTION</scope>
    <scope>CATALYTIC ACTIVITY</scope>
    <scope>ENZYME KINETICS</scope>
    <scope>MUTAGENESIS OF ALA-329</scope>
</reference>
<organism>
    <name type="scientific">Priestia megaterium (strain ATCC 14581 / DSM 32 / CCUG 1817 / JCM 2506 / NBRC 15308 / NCIMB 9376 / NCTC 10342 / NRRL B-14308 / VKM B-512 / Ford 19)</name>
    <name type="common">Bacillus megaterium</name>
    <dbReference type="NCBI Taxonomy" id="1348623"/>
    <lineage>
        <taxon>Bacteria</taxon>
        <taxon>Bacillati</taxon>
        <taxon>Bacillota</taxon>
        <taxon>Bacilli</taxon>
        <taxon>Bacillales</taxon>
        <taxon>Bacillaceae</taxon>
        <taxon>Priestia</taxon>
    </lineage>
</organism>
<protein>
    <recommendedName>
        <fullName evidence="38">Bifunctional cytochrome P450/NADPH--P450 reductase</fullName>
    </recommendedName>
    <alternativeName>
        <fullName evidence="33">Cytochrome P450(BM-3)</fullName>
    </alternativeName>
    <alternativeName>
        <fullName evidence="37 41">Cytochrome P450BM-3</fullName>
    </alternativeName>
    <alternativeName>
        <fullName evidence="36">Fatty acid monooxygenase</fullName>
    </alternativeName>
    <alternativeName>
        <fullName evidence="31 32">Flavocytochrome P450 BM3</fullName>
    </alternativeName>
    <domain>
        <recommendedName>
            <fullName>Cytochrome P450 102A1</fullName>
            <ecNumber evidence="5 6 12 14 18 27 28">1.14.14.1</ecNumber>
        </recommendedName>
    </domain>
    <domain>
        <recommendedName>
            <fullName>NADPH--cytochrome P450 reductase</fullName>
            <ecNumber evidence="5 6 12 14 18 27 28">1.6.2.4</ecNumber>
        </recommendedName>
    </domain>
</protein>
<accession>P14779</accession>
<accession>A0A0B6AQ66</accession>
<accession>Q9AE23</accession>
<proteinExistence type="evidence at protein level"/>
<evidence type="ECO:0000250" key="1"/>
<evidence type="ECO:0000255" key="2">
    <source>
        <dbReference type="PROSITE-ProRule" id="PRU00088"/>
    </source>
</evidence>
<evidence type="ECO:0000255" key="3">
    <source>
        <dbReference type="PROSITE-ProRule" id="PRU00716"/>
    </source>
</evidence>
<evidence type="ECO:0000269" key="4">
    <source>
    </source>
</evidence>
<evidence type="ECO:0000269" key="5">
    <source>
    </source>
</evidence>
<evidence type="ECO:0000269" key="6">
    <source>
    </source>
</evidence>
<evidence type="ECO:0000269" key="7">
    <source>
    </source>
</evidence>
<evidence type="ECO:0000269" key="8">
    <source>
    </source>
</evidence>
<evidence type="ECO:0000269" key="9">
    <source>
    </source>
</evidence>
<evidence type="ECO:0000269" key="10">
    <source>
    </source>
</evidence>
<evidence type="ECO:0000269" key="11">
    <source>
    </source>
</evidence>
<evidence type="ECO:0000269" key="12">
    <source>
    </source>
</evidence>
<evidence type="ECO:0000269" key="13">
    <source>
    </source>
</evidence>
<evidence type="ECO:0000269" key="14">
    <source>
    </source>
</evidence>
<evidence type="ECO:0000269" key="15">
    <source>
    </source>
</evidence>
<evidence type="ECO:0000269" key="16">
    <source>
    </source>
</evidence>
<evidence type="ECO:0000269" key="17">
    <source>
    </source>
</evidence>
<evidence type="ECO:0000269" key="18">
    <source>
    </source>
</evidence>
<evidence type="ECO:0000269" key="19">
    <source>
    </source>
</evidence>
<evidence type="ECO:0000269" key="20">
    <source>
    </source>
</evidence>
<evidence type="ECO:0000269" key="21">
    <source>
    </source>
</evidence>
<evidence type="ECO:0000269" key="22">
    <source>
    </source>
</evidence>
<evidence type="ECO:0000269" key="23">
    <source>
    </source>
</evidence>
<evidence type="ECO:0000269" key="24">
    <source>
    </source>
</evidence>
<evidence type="ECO:0000269" key="25">
    <source>
    </source>
</evidence>
<evidence type="ECO:0000269" key="26">
    <source>
    </source>
</evidence>
<evidence type="ECO:0000269" key="27">
    <source>
    </source>
</evidence>
<evidence type="ECO:0000269" key="28">
    <source>
    </source>
</evidence>
<evidence type="ECO:0000269" key="29">
    <source>
    </source>
</evidence>
<evidence type="ECO:0000269" key="30">
    <source>
    </source>
</evidence>
<evidence type="ECO:0000303" key="31">
    <source>
    </source>
</evidence>
<evidence type="ECO:0000303" key="32">
    <source>
    </source>
</evidence>
<evidence type="ECO:0000303" key="33">
    <source>
    </source>
</evidence>
<evidence type="ECO:0000303" key="34">
    <source>
    </source>
</evidence>
<evidence type="ECO:0000303" key="35">
    <source>
    </source>
</evidence>
<evidence type="ECO:0000303" key="36">
    <source>
    </source>
</evidence>
<evidence type="ECO:0000303" key="37">
    <source>
    </source>
</evidence>
<evidence type="ECO:0000305" key="38"/>
<evidence type="ECO:0000305" key="39">
    <source>
    </source>
</evidence>
<evidence type="ECO:0000305" key="40">
    <source>
    </source>
</evidence>
<evidence type="ECO:0000312" key="41">
    <source>
        <dbReference type="EMBL" id="AAK19020.1"/>
    </source>
</evidence>
<evidence type="ECO:0000312" key="42">
    <source>
        <dbReference type="EMBL" id="AJI21949.1"/>
    </source>
</evidence>
<evidence type="ECO:0000312" key="43">
    <source>
        <dbReference type="Proteomes" id="UP000031829"/>
    </source>
</evidence>
<evidence type="ECO:0007744" key="44">
    <source>
        <dbReference type="PDB" id="1BU7"/>
    </source>
</evidence>
<evidence type="ECO:0007744" key="45">
    <source>
        <dbReference type="PDB" id="1BVY"/>
    </source>
</evidence>
<evidence type="ECO:0007744" key="46">
    <source>
        <dbReference type="PDB" id="1FAG"/>
    </source>
</evidence>
<evidence type="ECO:0007744" key="47">
    <source>
        <dbReference type="PDB" id="1FAH"/>
    </source>
</evidence>
<evidence type="ECO:0007744" key="48">
    <source>
        <dbReference type="PDB" id="1JME"/>
    </source>
</evidence>
<evidence type="ECO:0007744" key="49">
    <source>
        <dbReference type="PDB" id="1JPZ"/>
    </source>
</evidence>
<evidence type="ECO:0007744" key="50">
    <source>
        <dbReference type="PDB" id="1P0V"/>
    </source>
</evidence>
<evidence type="ECO:0007744" key="51">
    <source>
        <dbReference type="PDB" id="1P0W"/>
    </source>
</evidence>
<evidence type="ECO:0007744" key="52">
    <source>
        <dbReference type="PDB" id="1P0X"/>
    </source>
</evidence>
<evidence type="ECO:0007744" key="53">
    <source>
        <dbReference type="PDB" id="1SMI"/>
    </source>
</evidence>
<evidence type="ECO:0007744" key="54">
    <source>
        <dbReference type="PDB" id="1SMJ"/>
    </source>
</evidence>
<evidence type="ECO:0007744" key="55">
    <source>
        <dbReference type="PDB" id="1YQO"/>
    </source>
</evidence>
<evidence type="ECO:0007744" key="56">
    <source>
        <dbReference type="PDB" id="1YQP"/>
    </source>
</evidence>
<evidence type="ECO:0007744" key="57">
    <source>
        <dbReference type="PDB" id="1ZO4"/>
    </source>
</evidence>
<evidence type="ECO:0007744" key="58">
    <source>
        <dbReference type="PDB" id="1ZO9"/>
    </source>
</evidence>
<evidence type="ECO:0007744" key="59">
    <source>
        <dbReference type="PDB" id="1ZOA"/>
    </source>
</evidence>
<evidence type="ECO:0007744" key="60">
    <source>
        <dbReference type="PDB" id="2BMH"/>
    </source>
</evidence>
<evidence type="ECO:0007744" key="61">
    <source>
        <dbReference type="PDB" id="2HPD"/>
    </source>
</evidence>
<evidence type="ECO:0007744" key="62">
    <source>
        <dbReference type="PDB" id="2IJ2"/>
    </source>
</evidence>
<evidence type="ECO:0007744" key="63">
    <source>
        <dbReference type="PDB" id="2IJ3"/>
    </source>
</evidence>
<evidence type="ECO:0007744" key="64">
    <source>
        <dbReference type="PDB" id="2IJ4"/>
    </source>
</evidence>
<evidence type="ECO:0007744" key="65">
    <source>
        <dbReference type="PDB" id="2J1M"/>
    </source>
</evidence>
<evidence type="ECO:0007744" key="66">
    <source>
        <dbReference type="PDB" id="2J4S"/>
    </source>
</evidence>
<evidence type="ECO:0007744" key="67">
    <source>
        <dbReference type="PDB" id="2UWH"/>
    </source>
</evidence>
<evidence type="ECO:0007744" key="68">
    <source>
        <dbReference type="PDB" id="3BEN"/>
    </source>
</evidence>
<evidence type="ECO:0007744" key="69">
    <source>
        <dbReference type="PDB" id="3CBD"/>
    </source>
</evidence>
<evidence type="ECO:0007744" key="70">
    <source>
        <dbReference type="PDB" id="3EKB"/>
    </source>
</evidence>
<evidence type="ECO:0007744" key="71">
    <source>
        <dbReference type="PDB" id="3EKD"/>
    </source>
</evidence>
<evidence type="ECO:0007744" key="72">
    <source>
        <dbReference type="PDB" id="3EKF"/>
    </source>
</evidence>
<evidence type="ECO:0007744" key="73">
    <source>
        <dbReference type="PDB" id="3HF2"/>
    </source>
</evidence>
<evidence type="ECO:0007744" key="74">
    <source>
        <dbReference type="PDB" id="3KX3"/>
    </source>
</evidence>
<evidence type="ECO:0007744" key="75">
    <source>
        <dbReference type="PDB" id="3KX4"/>
    </source>
</evidence>
<evidence type="ECO:0007744" key="76">
    <source>
        <dbReference type="PDB" id="3KX5"/>
    </source>
</evidence>
<evidence type="ECO:0007744" key="77">
    <source>
        <dbReference type="PDB" id="3M4V"/>
    </source>
</evidence>
<evidence type="ECO:0007744" key="78">
    <source>
        <dbReference type="PDB" id="3NPL"/>
    </source>
</evidence>
<evidence type="ECO:0007829" key="79">
    <source>
        <dbReference type="PDB" id="1BVY"/>
    </source>
</evidence>
<evidence type="ECO:0007829" key="80">
    <source>
        <dbReference type="PDB" id="2IJ2"/>
    </source>
</evidence>
<evidence type="ECO:0007829" key="81">
    <source>
        <dbReference type="PDB" id="4DQK"/>
    </source>
</evidence>
<evidence type="ECO:0007829" key="82">
    <source>
        <dbReference type="PDB" id="4DQL"/>
    </source>
</evidence>
<evidence type="ECO:0007829" key="83">
    <source>
        <dbReference type="PDB" id="4HGJ"/>
    </source>
</evidence>
<evidence type="ECO:0007829" key="84">
    <source>
        <dbReference type="PDB" id="4WG2"/>
    </source>
</evidence>
<evidence type="ECO:0007829" key="85">
    <source>
        <dbReference type="PDB" id="4ZFB"/>
    </source>
</evidence>
<evidence type="ECO:0007829" key="86">
    <source>
        <dbReference type="PDB" id="5JQU"/>
    </source>
</evidence>
<evidence type="ECO:0007829" key="87">
    <source>
        <dbReference type="PDB" id="5JQV"/>
    </source>
</evidence>
<evidence type="ECO:0007829" key="88">
    <source>
        <dbReference type="PDB" id="6JLV"/>
    </source>
</evidence>
<evidence type="ECO:0007829" key="89">
    <source>
        <dbReference type="PDB" id="7YDB"/>
    </source>
</evidence>
<gene>
    <name evidence="42" type="primary">cyp102A1</name>
    <name type="synonym">cyp102</name>
    <name evidence="42" type="ORF">BG04_163</name>
</gene>
<dbReference type="EC" id="1.14.14.1" evidence="5 6 12 14 18 27 28"/>
<dbReference type="EC" id="1.6.2.4" evidence="5 6 12 14 18 27 28"/>
<dbReference type="EMBL" id="J04832">
    <property type="protein sequence ID" value="AAA87602.1"/>
    <property type="molecule type" value="Genomic_DNA"/>
</dbReference>
<dbReference type="EMBL" id="CP009920">
    <property type="protein sequence ID" value="AJI21949.1"/>
    <property type="molecule type" value="Genomic_DNA"/>
</dbReference>
<dbReference type="EMBL" id="S87512">
    <property type="protein sequence ID" value="AAK19020.1"/>
    <property type="molecule type" value="Genomic_DNA"/>
</dbReference>
<dbReference type="PIR" id="A34286">
    <property type="entry name" value="A34286"/>
</dbReference>
<dbReference type="RefSeq" id="WP_034650526.1">
    <property type="nucleotide sequence ID" value="NZ_BCVB01000006.1"/>
</dbReference>
<dbReference type="PDB" id="1BU7">
    <property type="method" value="X-ray"/>
    <property type="resolution" value="1.65 A"/>
    <property type="chains" value="A/B=2-456"/>
</dbReference>
<dbReference type="PDB" id="1BVY">
    <property type="method" value="X-ray"/>
    <property type="resolution" value="2.03 A"/>
    <property type="chains" value="A/B=2-459, F=460-650"/>
</dbReference>
<dbReference type="PDB" id="1FAG">
    <property type="method" value="X-ray"/>
    <property type="resolution" value="2.70 A"/>
    <property type="chains" value="A/B/C/D=2-472"/>
</dbReference>
<dbReference type="PDB" id="1FAH">
    <property type="method" value="X-ray"/>
    <property type="resolution" value="2.30 A"/>
    <property type="chains" value="A/B=2-472"/>
</dbReference>
<dbReference type="PDB" id="1JME">
    <property type="method" value="X-ray"/>
    <property type="resolution" value="2.00 A"/>
    <property type="chains" value="A/B=2-456"/>
</dbReference>
<dbReference type="PDB" id="1JPZ">
    <property type="method" value="X-ray"/>
    <property type="resolution" value="1.65 A"/>
    <property type="chains" value="A/B=2-471"/>
</dbReference>
<dbReference type="PDB" id="1P0V">
    <property type="method" value="X-ray"/>
    <property type="resolution" value="2.05 A"/>
    <property type="chains" value="A/B=2-456"/>
</dbReference>
<dbReference type="PDB" id="1P0W">
    <property type="method" value="X-ray"/>
    <property type="resolution" value="2.00 A"/>
    <property type="chains" value="A/B=2-456"/>
</dbReference>
<dbReference type="PDB" id="1P0X">
    <property type="method" value="X-ray"/>
    <property type="resolution" value="2.00 A"/>
    <property type="chains" value="A/B=2-456"/>
</dbReference>
<dbReference type="PDB" id="1SMI">
    <property type="method" value="X-ray"/>
    <property type="resolution" value="2.00 A"/>
    <property type="chains" value="A/B=2-472"/>
</dbReference>
<dbReference type="PDB" id="1SMJ">
    <property type="method" value="X-ray"/>
    <property type="resolution" value="2.75 A"/>
    <property type="chains" value="A/B/C/D=2-472"/>
</dbReference>
<dbReference type="PDB" id="1YQO">
    <property type="method" value="X-ray"/>
    <property type="resolution" value="1.90 A"/>
    <property type="chains" value="A/B=2-456"/>
</dbReference>
<dbReference type="PDB" id="1YQP">
    <property type="method" value="X-ray"/>
    <property type="resolution" value="1.80 A"/>
    <property type="chains" value="A/B=2-456"/>
</dbReference>
<dbReference type="PDB" id="1ZO4">
    <property type="method" value="X-ray"/>
    <property type="resolution" value="1.46 A"/>
    <property type="chains" value="A/B=2-471"/>
</dbReference>
<dbReference type="PDB" id="1ZO9">
    <property type="method" value="X-ray"/>
    <property type="resolution" value="1.70 A"/>
    <property type="chains" value="A/B=2-471"/>
</dbReference>
<dbReference type="PDB" id="1ZOA">
    <property type="method" value="X-ray"/>
    <property type="resolution" value="1.74 A"/>
    <property type="chains" value="A/B=2-471"/>
</dbReference>
<dbReference type="PDB" id="2BMH">
    <property type="method" value="X-ray"/>
    <property type="resolution" value="2.00 A"/>
    <property type="chains" value="A/B=2-456"/>
</dbReference>
<dbReference type="PDB" id="2HPD">
    <property type="method" value="X-ray"/>
    <property type="resolution" value="2.00 A"/>
    <property type="chains" value="A/B=2-472"/>
</dbReference>
<dbReference type="PDB" id="2IJ2">
    <property type="method" value="X-ray"/>
    <property type="resolution" value="1.20 A"/>
    <property type="chains" value="A/B=2-471"/>
</dbReference>
<dbReference type="PDB" id="2IJ3">
    <property type="method" value="X-ray"/>
    <property type="resolution" value="1.90 A"/>
    <property type="chains" value="A/B=2-471"/>
</dbReference>
<dbReference type="PDB" id="2IJ4">
    <property type="method" value="X-ray"/>
    <property type="resolution" value="2.40 A"/>
    <property type="chains" value="A/B=2-471"/>
</dbReference>
<dbReference type="PDB" id="2J1M">
    <property type="method" value="X-ray"/>
    <property type="resolution" value="1.70 A"/>
    <property type="chains" value="A/B=2-456"/>
</dbReference>
<dbReference type="PDB" id="2J4S">
    <property type="method" value="X-ray"/>
    <property type="resolution" value="2.10 A"/>
    <property type="chains" value="A/B=2-456"/>
</dbReference>
<dbReference type="PDB" id="2NNB">
    <property type="method" value="X-ray"/>
    <property type="resolution" value="1.90 A"/>
    <property type="chains" value="A/B=2-472"/>
</dbReference>
<dbReference type="PDB" id="2UWH">
    <property type="method" value="X-ray"/>
    <property type="resolution" value="2.80 A"/>
    <property type="chains" value="A/B/C/D/E/F=2-459"/>
</dbReference>
<dbReference type="PDB" id="2X7Y">
    <property type="method" value="X-ray"/>
    <property type="resolution" value="2.10 A"/>
    <property type="chains" value="A/B=2-456"/>
</dbReference>
<dbReference type="PDB" id="2X80">
    <property type="method" value="X-ray"/>
    <property type="resolution" value="2.30 A"/>
    <property type="chains" value="A/B=2-456"/>
</dbReference>
<dbReference type="PDB" id="3BEN">
    <property type="method" value="X-ray"/>
    <property type="resolution" value="1.65 A"/>
    <property type="chains" value="A/B=1-470"/>
</dbReference>
<dbReference type="PDB" id="3CBD">
    <property type="method" value="X-ray"/>
    <property type="resolution" value="2.65 A"/>
    <property type="chains" value="A/B=2-456"/>
</dbReference>
<dbReference type="PDB" id="3DGI">
    <property type="method" value="X-ray"/>
    <property type="resolution" value="1.95 A"/>
    <property type="chains" value="A/B=2-456"/>
</dbReference>
<dbReference type="PDB" id="3EKB">
    <property type="method" value="X-ray"/>
    <property type="resolution" value="2.30 A"/>
    <property type="chains" value="A/B=2-471"/>
</dbReference>
<dbReference type="PDB" id="3EKD">
    <property type="method" value="X-ray"/>
    <property type="resolution" value="2.50 A"/>
    <property type="chains" value="A/B=2-471"/>
</dbReference>
<dbReference type="PDB" id="3EKF">
    <property type="method" value="X-ray"/>
    <property type="resolution" value="2.10 A"/>
    <property type="chains" value="A/B=2-471"/>
</dbReference>
<dbReference type="PDB" id="3HF2">
    <property type="method" value="X-ray"/>
    <property type="resolution" value="2.20 A"/>
    <property type="chains" value="A/B=1-482"/>
</dbReference>
<dbReference type="PDB" id="3KX3">
    <property type="method" value="X-ray"/>
    <property type="resolution" value="1.80 A"/>
    <property type="chains" value="A/B=2-471"/>
</dbReference>
<dbReference type="PDB" id="3KX4">
    <property type="method" value="X-ray"/>
    <property type="resolution" value="1.95 A"/>
    <property type="chains" value="A/B=2-471"/>
</dbReference>
<dbReference type="PDB" id="3KX5">
    <property type="method" value="X-ray"/>
    <property type="resolution" value="1.69 A"/>
    <property type="chains" value="A/B=2-471"/>
</dbReference>
<dbReference type="PDB" id="3M4V">
    <property type="method" value="X-ray"/>
    <property type="resolution" value="1.90 A"/>
    <property type="chains" value="A/B=1-482"/>
</dbReference>
<dbReference type="PDB" id="3NPL">
    <property type="method" value="X-ray"/>
    <property type="resolution" value="2.40 A"/>
    <property type="chains" value="A/B=1-464"/>
</dbReference>
<dbReference type="PDB" id="3PSX">
    <property type="method" value="X-ray"/>
    <property type="resolution" value="1.90 A"/>
    <property type="chains" value="A/B=1-482"/>
</dbReference>
<dbReference type="PDB" id="3WSP">
    <property type="method" value="X-ray"/>
    <property type="resolution" value="1.80 A"/>
    <property type="chains" value="A/B=1-456"/>
</dbReference>
<dbReference type="PDB" id="4DQK">
    <property type="method" value="X-ray"/>
    <property type="resolution" value="2.40 A"/>
    <property type="chains" value="A/B=659-1049"/>
</dbReference>
<dbReference type="PDB" id="4DQL">
    <property type="method" value="X-ray"/>
    <property type="resolution" value="2.15 A"/>
    <property type="chains" value="A/B=657-1049"/>
</dbReference>
<dbReference type="PDB" id="4DTW">
    <property type="method" value="X-ray"/>
    <property type="resolution" value="1.80 A"/>
    <property type="chains" value="A/B=2-464"/>
</dbReference>
<dbReference type="PDB" id="4DTY">
    <property type="method" value="X-ray"/>
    <property type="resolution" value="1.45 A"/>
    <property type="chains" value="A/B=2-464"/>
</dbReference>
<dbReference type="PDB" id="4DTZ">
    <property type="method" value="X-ray"/>
    <property type="resolution" value="1.55 A"/>
    <property type="chains" value="A/B=2-464"/>
</dbReference>
<dbReference type="PDB" id="4DU2">
    <property type="method" value="X-ray"/>
    <property type="resolution" value="1.90 A"/>
    <property type="chains" value="A/B=1-464"/>
</dbReference>
<dbReference type="PDB" id="4DUA">
    <property type="method" value="X-ray"/>
    <property type="resolution" value="2.00 A"/>
    <property type="chains" value="A/B=2-464"/>
</dbReference>
<dbReference type="PDB" id="4DUB">
    <property type="method" value="X-ray"/>
    <property type="resolution" value="1.70 A"/>
    <property type="chains" value="A/B=1-464"/>
</dbReference>
<dbReference type="PDB" id="4DUC">
    <property type="method" value="X-ray"/>
    <property type="resolution" value="1.92 A"/>
    <property type="chains" value="A/B=1-464"/>
</dbReference>
<dbReference type="PDB" id="4DUD">
    <property type="method" value="X-ray"/>
    <property type="resolution" value="1.85 A"/>
    <property type="chains" value="A/B=2-464"/>
</dbReference>
<dbReference type="PDB" id="4DUE">
    <property type="method" value="X-ray"/>
    <property type="resolution" value="1.70 A"/>
    <property type="chains" value="A/B=2-464"/>
</dbReference>
<dbReference type="PDB" id="4DUF">
    <property type="method" value="X-ray"/>
    <property type="resolution" value="1.80 A"/>
    <property type="chains" value="A/B/C/D=2-464"/>
</dbReference>
<dbReference type="PDB" id="4H23">
    <property type="method" value="X-ray"/>
    <property type="resolution" value="3.30 A"/>
    <property type="chains" value="A/B=1-464"/>
</dbReference>
<dbReference type="PDB" id="4H24">
    <property type="method" value="X-ray"/>
    <property type="resolution" value="2.50 A"/>
    <property type="chains" value="A/B/C/D=1-464"/>
</dbReference>
<dbReference type="PDB" id="4HGF">
    <property type="method" value="X-ray"/>
    <property type="resolution" value="1.70 A"/>
    <property type="chains" value="A/B=2-456"/>
</dbReference>
<dbReference type="PDB" id="4HGG">
    <property type="method" value="X-ray"/>
    <property type="resolution" value="1.70 A"/>
    <property type="chains" value="A/B=2-456"/>
</dbReference>
<dbReference type="PDB" id="4HGH">
    <property type="method" value="X-ray"/>
    <property type="resolution" value="1.40 A"/>
    <property type="chains" value="A/B=2-456"/>
</dbReference>
<dbReference type="PDB" id="4HGI">
    <property type="method" value="X-ray"/>
    <property type="resolution" value="1.50 A"/>
    <property type="chains" value="A/B=2-456"/>
</dbReference>
<dbReference type="PDB" id="4HGJ">
    <property type="method" value="X-ray"/>
    <property type="resolution" value="1.90 A"/>
    <property type="chains" value="A/B=2-456"/>
</dbReference>
<dbReference type="PDB" id="4KEW">
    <property type="method" value="X-ray"/>
    <property type="resolution" value="1.89 A"/>
    <property type="chains" value="A/B=2-456"/>
</dbReference>
<dbReference type="PDB" id="4KEY">
    <property type="method" value="X-ray"/>
    <property type="resolution" value="2.05 A"/>
    <property type="chains" value="A/B=2-456"/>
</dbReference>
<dbReference type="PDB" id="4KF0">
    <property type="method" value="X-ray"/>
    <property type="resolution" value="1.45 A"/>
    <property type="chains" value="A/B=2-458"/>
</dbReference>
<dbReference type="PDB" id="4KF2">
    <property type="method" value="X-ray"/>
    <property type="resolution" value="1.82 A"/>
    <property type="chains" value="A/B=2-458"/>
</dbReference>
<dbReference type="PDB" id="4KPA">
    <property type="method" value="X-ray"/>
    <property type="resolution" value="2.00 A"/>
    <property type="chains" value="A=1-471"/>
</dbReference>
<dbReference type="PDB" id="4KPB">
    <property type="method" value="X-ray"/>
    <property type="resolution" value="2.10 A"/>
    <property type="chains" value="A/B=1-471"/>
</dbReference>
<dbReference type="PDB" id="4O4P">
    <property type="method" value="X-ray"/>
    <property type="resolution" value="1.83 A"/>
    <property type="chains" value="A/B=2-456"/>
</dbReference>
<dbReference type="PDB" id="4RSN">
    <property type="method" value="X-ray"/>
    <property type="resolution" value="2.70 A"/>
    <property type="chains" value="A/B=1-456"/>
</dbReference>
<dbReference type="PDB" id="4WG2">
    <property type="method" value="X-ray"/>
    <property type="resolution" value="2.66 A"/>
    <property type="chains" value="A/B/C=2-464"/>
</dbReference>
<dbReference type="PDB" id="4ZF6">
    <property type="method" value="X-ray"/>
    <property type="resolution" value="2.77 A"/>
    <property type="chains" value="A=1-461"/>
</dbReference>
<dbReference type="PDB" id="4ZF8">
    <property type="method" value="X-ray"/>
    <property type="resolution" value="2.77 A"/>
    <property type="chains" value="A=1-461"/>
</dbReference>
<dbReference type="PDB" id="4ZFA">
    <property type="method" value="X-ray"/>
    <property type="resolution" value="2.77 A"/>
    <property type="chains" value="A=1-461"/>
</dbReference>
<dbReference type="PDB" id="4ZFB">
    <property type="method" value="X-ray"/>
    <property type="resolution" value="2.84 A"/>
    <property type="chains" value="A=1-461"/>
</dbReference>
<dbReference type="PDB" id="5B2U">
    <property type="method" value="X-ray"/>
    <property type="resolution" value="1.90 A"/>
    <property type="chains" value="A/B=1-456"/>
</dbReference>
<dbReference type="PDB" id="5B2V">
    <property type="method" value="X-ray"/>
    <property type="resolution" value="2.30 A"/>
    <property type="chains" value="A/B=1-456"/>
</dbReference>
<dbReference type="PDB" id="5B2W">
    <property type="method" value="X-ray"/>
    <property type="resolution" value="1.65 A"/>
    <property type="chains" value="A/B=1-456"/>
</dbReference>
<dbReference type="PDB" id="5B2X">
    <property type="method" value="X-ray"/>
    <property type="resolution" value="1.90 A"/>
    <property type="chains" value="A/B=1-456"/>
</dbReference>
<dbReference type="PDB" id="5B2Y">
    <property type="method" value="X-ray"/>
    <property type="resolution" value="2.01 A"/>
    <property type="chains" value="A/B=1-456"/>
</dbReference>
<dbReference type="PDB" id="5DYP">
    <property type="method" value="X-ray"/>
    <property type="resolution" value="2.40 A"/>
    <property type="chains" value="A/C=2-471"/>
</dbReference>
<dbReference type="PDB" id="5DYZ">
    <property type="method" value="X-ray"/>
    <property type="resolution" value="1.97 A"/>
    <property type="chains" value="A/C=2-471"/>
</dbReference>
<dbReference type="PDB" id="5E78">
    <property type="method" value="X-ray"/>
    <property type="resolution" value="2.00 A"/>
    <property type="chains" value="A/B=2-456"/>
</dbReference>
<dbReference type="PDB" id="5E7Y">
    <property type="method" value="X-ray"/>
    <property type="resolution" value="2.00 A"/>
    <property type="chains" value="A/B=2-472"/>
</dbReference>
<dbReference type="PDB" id="5E9Z">
    <property type="method" value="X-ray"/>
    <property type="resolution" value="2.23 A"/>
    <property type="chains" value="A/B/C/D=1-468"/>
</dbReference>
<dbReference type="PDB" id="5JQ2">
    <property type="method" value="X-ray"/>
    <property type="resolution" value="2.00 A"/>
    <property type="chains" value="A/B=2-464"/>
</dbReference>
<dbReference type="PDB" id="5JQU">
    <property type="method" value="X-ray"/>
    <property type="resolution" value="2.16 A"/>
    <property type="chains" value="A/B/C/D/E/F/G/H=2-464"/>
</dbReference>
<dbReference type="PDB" id="5JQV">
    <property type="method" value="X-ray"/>
    <property type="resolution" value="2.34 A"/>
    <property type="chains" value="A/B/C/D/E/F/G/H=2-464"/>
</dbReference>
<dbReference type="PDB" id="5JTD">
    <property type="method" value="X-ray"/>
    <property type="resolution" value="1.50 A"/>
    <property type="chains" value="A/B=2-464"/>
</dbReference>
<dbReference type="PDB" id="5OG9">
    <property type="method" value="X-ray"/>
    <property type="resolution" value="2.09 A"/>
    <property type="chains" value="A/B=2-474"/>
</dbReference>
<dbReference type="PDB" id="5UCW">
    <property type="method" value="X-ray"/>
    <property type="resolution" value="1.70 A"/>
    <property type="chains" value="A/B=1-464"/>
</dbReference>
<dbReference type="PDB" id="5XA3">
    <property type="method" value="X-ray"/>
    <property type="resolution" value="2.20 A"/>
    <property type="chains" value="A/B/C/D=1-456"/>
</dbReference>
<dbReference type="PDB" id="5XHJ">
    <property type="method" value="X-ray"/>
    <property type="resolution" value="2.00 A"/>
    <property type="chains" value="A/B=1-456"/>
</dbReference>
<dbReference type="PDB" id="5ZIS">
    <property type="method" value="X-ray"/>
    <property type="resolution" value="3.10 A"/>
    <property type="chains" value="A/B/C/D=2-456"/>
</dbReference>
<dbReference type="PDB" id="5ZLH">
    <property type="method" value="X-ray"/>
    <property type="resolution" value="3.40 A"/>
    <property type="chains" value="A/B/C/D=2-456"/>
</dbReference>
<dbReference type="PDB" id="6H1O">
    <property type="method" value="X-ray"/>
    <property type="resolution" value="1.73 A"/>
    <property type="chains" value="A/B=2-458"/>
</dbReference>
<dbReference type="PDB" id="6H1S">
    <property type="method" value="X-ray"/>
    <property type="resolution" value="1.95 A"/>
    <property type="chains" value="A/B=2-458"/>
</dbReference>
<dbReference type="PDB" id="6HN8">
    <property type="method" value="X-ray"/>
    <property type="resolution" value="2.00 A"/>
    <property type="chains" value="A/B=1-456"/>
</dbReference>
<dbReference type="PDB" id="6IAO">
    <property type="method" value="X-ray"/>
    <property type="resolution" value="2.16 A"/>
    <property type="chains" value="A/B/C/D=1-473"/>
</dbReference>
<dbReference type="PDB" id="6JLV">
    <property type="method" value="X-ray"/>
    <property type="resolution" value="1.22 A"/>
    <property type="chains" value="A/B=1-456"/>
</dbReference>
<dbReference type="PDB" id="6JMH">
    <property type="method" value="X-ray"/>
    <property type="resolution" value="1.46 A"/>
    <property type="chains" value="A/B=1-456"/>
</dbReference>
<dbReference type="PDB" id="6JMW">
    <property type="method" value="X-ray"/>
    <property type="resolution" value="1.85 A"/>
    <property type="chains" value="A/B=1-457"/>
</dbReference>
<dbReference type="PDB" id="6JO1">
    <property type="method" value="X-ray"/>
    <property type="resolution" value="2.10 A"/>
    <property type="chains" value="A/B=1-456"/>
</dbReference>
<dbReference type="PDB" id="6JS8">
    <property type="method" value="X-ray"/>
    <property type="resolution" value="1.36 A"/>
    <property type="chains" value="A/B=1-456"/>
</dbReference>
<dbReference type="PDB" id="6JVC">
    <property type="method" value="X-ray"/>
    <property type="resolution" value="1.75 A"/>
    <property type="chains" value="A/C=1-456"/>
</dbReference>
<dbReference type="PDB" id="6JZS">
    <property type="method" value="X-ray"/>
    <property type="resolution" value="1.68 A"/>
    <property type="chains" value="A/C=1-457"/>
</dbReference>
<dbReference type="PDB" id="6K24">
    <property type="method" value="X-ray"/>
    <property type="resolution" value="2.10 A"/>
    <property type="chains" value="A/B=2-457"/>
</dbReference>
<dbReference type="PDB" id="6K3Q">
    <property type="method" value="X-ray"/>
    <property type="resolution" value="2.06 A"/>
    <property type="chains" value="A/B=1-456"/>
</dbReference>
<dbReference type="PDB" id="6K58">
    <property type="method" value="X-ray"/>
    <property type="resolution" value="1.41 A"/>
    <property type="chains" value="A/B=1-456"/>
</dbReference>
<dbReference type="PDB" id="6K9S">
    <property type="method" value="X-ray"/>
    <property type="resolution" value="1.55 A"/>
    <property type="chains" value="A/B=1-456"/>
</dbReference>
<dbReference type="PDB" id="6L1A">
    <property type="method" value="X-ray"/>
    <property type="resolution" value="1.84 A"/>
    <property type="chains" value="A/B=1-456"/>
</dbReference>
<dbReference type="PDB" id="6L1B">
    <property type="method" value="X-ray"/>
    <property type="resolution" value="1.74 A"/>
    <property type="chains" value="A/B=1-456"/>
</dbReference>
<dbReference type="PDB" id="6LY4">
    <property type="method" value="X-ray"/>
    <property type="resolution" value="1.68 A"/>
    <property type="chains" value="A=3-457"/>
</dbReference>
<dbReference type="PDB" id="7CKN">
    <property type="method" value="X-ray"/>
    <property type="resolution" value="1.55 A"/>
    <property type="chains" value="A/B=1-456"/>
</dbReference>
<dbReference type="PDB" id="7CON">
    <property type="method" value="X-ray"/>
    <property type="resolution" value="1.46 A"/>
    <property type="chains" value="A/B=1-456"/>
</dbReference>
<dbReference type="PDB" id="7COO">
    <property type="method" value="X-ray"/>
    <property type="resolution" value="1.49 A"/>
    <property type="chains" value="A/B=1-456"/>
</dbReference>
<dbReference type="PDB" id="7CP8">
    <property type="method" value="X-ray"/>
    <property type="resolution" value="1.68 A"/>
    <property type="chains" value="A/B=1-456"/>
</dbReference>
<dbReference type="PDB" id="7CVR">
    <property type="method" value="X-ray"/>
    <property type="resolution" value="1.60 A"/>
    <property type="chains" value="A/B=1-456"/>
</dbReference>
<dbReference type="PDB" id="7CX6">
    <property type="method" value="X-ray"/>
    <property type="resolution" value="1.69 A"/>
    <property type="chains" value="A/B=1-456"/>
</dbReference>
<dbReference type="PDB" id="7CX8">
    <property type="method" value="X-ray"/>
    <property type="resolution" value="1.70 A"/>
    <property type="chains" value="A/B=1-456"/>
</dbReference>
<dbReference type="PDB" id="7CZI">
    <property type="method" value="X-ray"/>
    <property type="resolution" value="1.64 A"/>
    <property type="chains" value="A/B=1-456"/>
</dbReference>
<dbReference type="PDB" id="7D0T">
    <property type="method" value="X-ray"/>
    <property type="resolution" value="1.74 A"/>
    <property type="chains" value="A/B=1-456"/>
</dbReference>
<dbReference type="PDB" id="7D0U">
    <property type="method" value="X-ray"/>
    <property type="resolution" value="1.68 A"/>
    <property type="chains" value="A/B=1-456"/>
</dbReference>
<dbReference type="PDB" id="7D1F">
    <property type="method" value="X-ray"/>
    <property type="resolution" value="1.45 A"/>
    <property type="chains" value="A/B=1-456"/>
</dbReference>
<dbReference type="PDB" id="7E46">
    <property type="method" value="X-ray"/>
    <property type="resolution" value="1.91 A"/>
    <property type="chains" value="A/B=1-456"/>
</dbReference>
<dbReference type="PDB" id="7EGN">
    <property type="method" value="X-ray"/>
    <property type="resolution" value="2.70 A"/>
    <property type="chains" value="A/B=1-456"/>
</dbReference>
<dbReference type="PDB" id="7W97">
    <property type="method" value="X-ray"/>
    <property type="resolution" value="1.40 A"/>
    <property type="chains" value="A/B=1-456"/>
</dbReference>
<dbReference type="PDB" id="7W9D">
    <property type="method" value="X-ray"/>
    <property type="resolution" value="1.55 A"/>
    <property type="chains" value="A/B=1-456"/>
</dbReference>
<dbReference type="PDB" id="7W9J">
    <property type="method" value="X-ray"/>
    <property type="resolution" value="1.75 A"/>
    <property type="chains" value="A/B=1-456"/>
</dbReference>
<dbReference type="PDB" id="7WDD">
    <property type="method" value="X-ray"/>
    <property type="resolution" value="2.21 A"/>
    <property type="chains" value="A/B=1-456"/>
</dbReference>
<dbReference type="PDB" id="7WDE">
    <property type="method" value="X-ray"/>
    <property type="resolution" value="2.11 A"/>
    <property type="chains" value="A/B=1-456"/>
</dbReference>
<dbReference type="PDB" id="7WDG">
    <property type="method" value="X-ray"/>
    <property type="resolution" value="2.07 A"/>
    <property type="chains" value="A/B=1-456"/>
</dbReference>
<dbReference type="PDB" id="7WDH">
    <property type="method" value="X-ray"/>
    <property type="resolution" value="1.68 A"/>
    <property type="chains" value="A/B=1-456"/>
</dbReference>
<dbReference type="PDB" id="7WDI">
    <property type="method" value="X-ray"/>
    <property type="resolution" value="2.10 A"/>
    <property type="chains" value="A/B=1-456"/>
</dbReference>
<dbReference type="PDB" id="7WG0">
    <property type="method" value="X-ray"/>
    <property type="resolution" value="2.20 A"/>
    <property type="chains" value="A/B=1-457"/>
</dbReference>
<dbReference type="PDB" id="7WY1">
    <property type="method" value="X-ray"/>
    <property type="resolution" value="1.60 A"/>
    <property type="chains" value="A/B=1-456"/>
</dbReference>
<dbReference type="PDB" id="7WY2">
    <property type="method" value="X-ray"/>
    <property type="resolution" value="1.45 A"/>
    <property type="chains" value="A/B=1-456"/>
</dbReference>
<dbReference type="PDB" id="7WY3">
    <property type="method" value="X-ray"/>
    <property type="resolution" value="1.60 A"/>
    <property type="chains" value="A/B=1-456"/>
</dbReference>
<dbReference type="PDB" id="7WY4">
    <property type="method" value="X-ray"/>
    <property type="resolution" value="1.45 A"/>
    <property type="chains" value="A/B=1-456"/>
</dbReference>
<dbReference type="PDB" id="7XZK">
    <property type="method" value="X-ray"/>
    <property type="resolution" value="1.54 A"/>
    <property type="chains" value="A/B=1-456"/>
</dbReference>
<dbReference type="PDB" id="7Y0P">
    <property type="method" value="X-ray"/>
    <property type="resolution" value="1.99 A"/>
    <property type="chains" value="A/B=1-456"/>
</dbReference>
<dbReference type="PDB" id="7Y0Q">
    <property type="method" value="X-ray"/>
    <property type="resolution" value="2.31 A"/>
    <property type="chains" value="A/B=1-456"/>
</dbReference>
<dbReference type="PDB" id="7Y0R">
    <property type="method" value="X-ray"/>
    <property type="resolution" value="2.09 A"/>
    <property type="chains" value="A/B=1-456"/>
</dbReference>
<dbReference type="PDB" id="7Y0S">
    <property type="method" value="X-ray"/>
    <property type="resolution" value="2.06 A"/>
    <property type="chains" value="A/B=1-456"/>
</dbReference>
<dbReference type="PDB" id="7Y0T">
    <property type="method" value="X-ray"/>
    <property type="resolution" value="1.89 A"/>
    <property type="chains" value="A/B=1-456"/>
</dbReference>
<dbReference type="PDB" id="7Y0U">
    <property type="method" value="X-ray"/>
    <property type="resolution" value="2.00 A"/>
    <property type="chains" value="A/B=1-456"/>
</dbReference>
<dbReference type="PDB" id="7Y9J">
    <property type="method" value="X-ray"/>
    <property type="resolution" value="1.83 A"/>
    <property type="chains" value="A/B=3-465"/>
</dbReference>
<dbReference type="PDB" id="7Y9K">
    <property type="method" value="X-ray"/>
    <property type="resolution" value="2.23 A"/>
    <property type="chains" value="A/B=3-465"/>
</dbReference>
<dbReference type="PDB" id="7Y9L">
    <property type="method" value="X-ray"/>
    <property type="resolution" value="1.76 A"/>
    <property type="chains" value="A/B=3-458"/>
</dbReference>
<dbReference type="PDB" id="7Y9M">
    <property type="method" value="X-ray"/>
    <property type="resolution" value="2.16 A"/>
    <property type="chains" value="A/B=3-458"/>
</dbReference>
<dbReference type="PDB" id="7YD9">
    <property type="method" value="X-ray"/>
    <property type="resolution" value="1.75 A"/>
    <property type="chains" value="A/B=1-456"/>
</dbReference>
<dbReference type="PDB" id="7YDA">
    <property type="method" value="X-ray"/>
    <property type="resolution" value="1.56 A"/>
    <property type="chains" value="A/B=1-456"/>
</dbReference>
<dbReference type="PDB" id="7YDB">
    <property type="method" value="X-ray"/>
    <property type="resolution" value="1.47 A"/>
    <property type="chains" value="A/B=1-456"/>
</dbReference>
<dbReference type="PDB" id="7YDC">
    <property type="method" value="X-ray"/>
    <property type="resolution" value="1.61 A"/>
    <property type="chains" value="A/B=1-456"/>
</dbReference>
<dbReference type="PDB" id="7YDD">
    <property type="method" value="X-ray"/>
    <property type="resolution" value="1.66 A"/>
    <property type="chains" value="A/B=1-456"/>
</dbReference>
<dbReference type="PDB" id="7YDE">
    <property type="method" value="X-ray"/>
    <property type="resolution" value="1.79 A"/>
    <property type="chains" value="A/B=1-456"/>
</dbReference>
<dbReference type="PDB" id="7YDL">
    <property type="method" value="X-ray"/>
    <property type="resolution" value="1.58 A"/>
    <property type="chains" value="A/B=1-456"/>
</dbReference>
<dbReference type="PDB" id="7YFT">
    <property type="method" value="X-ray"/>
    <property type="resolution" value="2.00 A"/>
    <property type="chains" value="A/B=1-456"/>
</dbReference>
<dbReference type="PDB" id="7YJD">
    <property type="method" value="X-ray"/>
    <property type="resolution" value="1.90 A"/>
    <property type="chains" value="A/B=1-456"/>
</dbReference>
<dbReference type="PDB" id="7YJE">
    <property type="method" value="X-ray"/>
    <property type="resolution" value="1.85 A"/>
    <property type="chains" value="A/B=1-456"/>
</dbReference>
<dbReference type="PDB" id="7YJF">
    <property type="method" value="X-ray"/>
    <property type="resolution" value="1.51 A"/>
    <property type="chains" value="A/B=1-456"/>
</dbReference>
<dbReference type="PDB" id="7YJG">
    <property type="method" value="X-ray"/>
    <property type="resolution" value="1.68 A"/>
    <property type="chains" value="A/B=1-456"/>
</dbReference>
<dbReference type="PDB" id="7YJH">
    <property type="method" value="X-ray"/>
    <property type="resolution" value="1.79 A"/>
    <property type="chains" value="A/B=1-456"/>
</dbReference>
<dbReference type="PDB" id="8DME">
    <property type="method" value="EM"/>
    <property type="resolution" value="6.50 A"/>
    <property type="chains" value="A/B=4-1049"/>
</dbReference>
<dbReference type="PDB" id="8DMG">
    <property type="method" value="EM"/>
    <property type="resolution" value="4.40 A"/>
    <property type="chains" value="A/B=1-1049"/>
</dbReference>
<dbReference type="PDB" id="8DSG">
    <property type="method" value="X-ray"/>
    <property type="resolution" value="1.87 A"/>
    <property type="chains" value="A/B/C/D=1-464"/>
</dbReference>
<dbReference type="PDB" id="8HON">
    <property type="method" value="X-ray"/>
    <property type="resolution" value="2.01 A"/>
    <property type="chains" value="A/B=1-456"/>
</dbReference>
<dbReference type="PDB" id="8HOO">
    <property type="method" value="X-ray"/>
    <property type="resolution" value="1.86 A"/>
    <property type="chains" value="A/B=1-456"/>
</dbReference>
<dbReference type="PDB" id="8HOP">
    <property type="method" value="X-ray"/>
    <property type="resolution" value="1.86 A"/>
    <property type="chains" value="A/B=1-456"/>
</dbReference>
<dbReference type="PDB" id="8HOQ">
    <property type="method" value="X-ray"/>
    <property type="resolution" value="1.94 A"/>
    <property type="chains" value="A/B=1-456"/>
</dbReference>
<dbReference type="PDB" id="8HOR">
    <property type="method" value="X-ray"/>
    <property type="resolution" value="1.95 A"/>
    <property type="chains" value="A/B=1-456"/>
</dbReference>
<dbReference type="PDB" id="8HOS">
    <property type="method" value="X-ray"/>
    <property type="resolution" value="1.82 A"/>
    <property type="chains" value="A/B=1-456"/>
</dbReference>
<dbReference type="PDB" id="8HOT">
    <property type="method" value="X-ray"/>
    <property type="resolution" value="1.96 A"/>
    <property type="chains" value="A/B=1-456"/>
</dbReference>
<dbReference type="PDB" id="8HOU">
    <property type="method" value="X-ray"/>
    <property type="resolution" value="1.75 A"/>
    <property type="chains" value="A/B=1-456"/>
</dbReference>
<dbReference type="PDB" id="8JC3">
    <property type="method" value="X-ray"/>
    <property type="resolution" value="1.82 A"/>
    <property type="chains" value="A/B=1-456"/>
</dbReference>
<dbReference type="PDB" id="8JC4">
    <property type="method" value="X-ray"/>
    <property type="resolution" value="2.64 A"/>
    <property type="chains" value="A/B=1-456"/>
</dbReference>
<dbReference type="PDB" id="8Q2F">
    <property type="method" value="X-ray"/>
    <property type="resolution" value="3.43 A"/>
    <property type="chains" value="A/B/C/D/E/F=1-464"/>
</dbReference>
<dbReference type="PDB" id="8QZE">
    <property type="method" value="X-ray"/>
    <property type="resolution" value="1.87 A"/>
    <property type="chains" value="A/B=1-464"/>
</dbReference>
<dbReference type="PDB" id="8QZF">
    <property type="method" value="X-ray"/>
    <property type="resolution" value="1.80 A"/>
    <property type="chains" value="A/B=1-463"/>
</dbReference>
<dbReference type="PDB" id="8YAY">
    <property type="method" value="X-ray"/>
    <property type="resolution" value="1.80 A"/>
    <property type="chains" value="A/B=2-456"/>
</dbReference>
<dbReference type="PDB" id="8YAZ">
    <property type="method" value="X-ray"/>
    <property type="resolution" value="1.85 A"/>
    <property type="chains" value="A/B=2-456"/>
</dbReference>
<dbReference type="PDB" id="8YB0">
    <property type="method" value="X-ray"/>
    <property type="resolution" value="1.60 A"/>
    <property type="chains" value="A/B=2-456"/>
</dbReference>
<dbReference type="PDB" id="8YB1">
    <property type="method" value="X-ray"/>
    <property type="resolution" value="1.60 A"/>
    <property type="chains" value="A/B=2-456"/>
</dbReference>
<dbReference type="PDB" id="8YB2">
    <property type="method" value="X-ray"/>
    <property type="resolution" value="1.50 A"/>
    <property type="chains" value="A/B=2-456"/>
</dbReference>
<dbReference type="PDB" id="8YB3">
    <property type="method" value="X-ray"/>
    <property type="resolution" value="1.50 A"/>
    <property type="chains" value="A/B=2-456"/>
</dbReference>
<dbReference type="PDB" id="9ISS">
    <property type="method" value="X-ray"/>
    <property type="resolution" value="1.46 A"/>
    <property type="chains" value="A/B=2-456"/>
</dbReference>
<dbReference type="PDB" id="9IST">
    <property type="method" value="X-ray"/>
    <property type="resolution" value="2.27 A"/>
    <property type="chains" value="A/B=2-456"/>
</dbReference>
<dbReference type="PDB" id="9ISU">
    <property type="method" value="X-ray"/>
    <property type="resolution" value="1.32 A"/>
    <property type="chains" value="A/B=2-456"/>
</dbReference>
<dbReference type="PDBsum" id="1BU7"/>
<dbReference type="PDBsum" id="1BVY"/>
<dbReference type="PDBsum" id="1FAG"/>
<dbReference type="PDBsum" id="1FAH"/>
<dbReference type="PDBsum" id="1JME"/>
<dbReference type="PDBsum" id="1JPZ"/>
<dbReference type="PDBsum" id="1P0V"/>
<dbReference type="PDBsum" id="1P0W"/>
<dbReference type="PDBsum" id="1P0X"/>
<dbReference type="PDBsum" id="1SMI"/>
<dbReference type="PDBsum" id="1SMJ"/>
<dbReference type="PDBsum" id="1YQO"/>
<dbReference type="PDBsum" id="1YQP"/>
<dbReference type="PDBsum" id="1ZO4"/>
<dbReference type="PDBsum" id="1ZO9"/>
<dbReference type="PDBsum" id="1ZOA"/>
<dbReference type="PDBsum" id="2BMH"/>
<dbReference type="PDBsum" id="2HPD"/>
<dbReference type="PDBsum" id="2IJ2"/>
<dbReference type="PDBsum" id="2IJ3"/>
<dbReference type="PDBsum" id="2IJ4"/>
<dbReference type="PDBsum" id="2J1M"/>
<dbReference type="PDBsum" id="2J4S"/>
<dbReference type="PDBsum" id="2NNB"/>
<dbReference type="PDBsum" id="2UWH"/>
<dbReference type="PDBsum" id="2X7Y"/>
<dbReference type="PDBsum" id="2X80"/>
<dbReference type="PDBsum" id="3BEN"/>
<dbReference type="PDBsum" id="3CBD"/>
<dbReference type="PDBsum" id="3DGI"/>
<dbReference type="PDBsum" id="3EKB"/>
<dbReference type="PDBsum" id="3EKD"/>
<dbReference type="PDBsum" id="3EKF"/>
<dbReference type="PDBsum" id="3HF2"/>
<dbReference type="PDBsum" id="3KX3"/>
<dbReference type="PDBsum" id="3KX4"/>
<dbReference type="PDBsum" id="3KX5"/>
<dbReference type="PDBsum" id="3M4V"/>
<dbReference type="PDBsum" id="3NPL"/>
<dbReference type="PDBsum" id="3PSX"/>
<dbReference type="PDBsum" id="3WSP"/>
<dbReference type="PDBsum" id="4DQK"/>
<dbReference type="PDBsum" id="4DQL"/>
<dbReference type="PDBsum" id="4DTW"/>
<dbReference type="PDBsum" id="4DTY"/>
<dbReference type="PDBsum" id="4DTZ"/>
<dbReference type="PDBsum" id="4DU2"/>
<dbReference type="PDBsum" id="4DUA"/>
<dbReference type="PDBsum" id="4DUB"/>
<dbReference type="PDBsum" id="4DUC"/>
<dbReference type="PDBsum" id="4DUD"/>
<dbReference type="PDBsum" id="4DUE"/>
<dbReference type="PDBsum" id="4DUF"/>
<dbReference type="PDBsum" id="4H23"/>
<dbReference type="PDBsum" id="4H24"/>
<dbReference type="PDBsum" id="4HGF"/>
<dbReference type="PDBsum" id="4HGG"/>
<dbReference type="PDBsum" id="4HGH"/>
<dbReference type="PDBsum" id="4HGI"/>
<dbReference type="PDBsum" id="4HGJ"/>
<dbReference type="PDBsum" id="4KEW"/>
<dbReference type="PDBsum" id="4KEY"/>
<dbReference type="PDBsum" id="4KF0"/>
<dbReference type="PDBsum" id="4KF2"/>
<dbReference type="PDBsum" id="4KPA"/>
<dbReference type="PDBsum" id="4KPB"/>
<dbReference type="PDBsum" id="4O4P"/>
<dbReference type="PDBsum" id="4RSN"/>
<dbReference type="PDBsum" id="4WG2"/>
<dbReference type="PDBsum" id="4ZF6"/>
<dbReference type="PDBsum" id="4ZF8"/>
<dbReference type="PDBsum" id="4ZFA"/>
<dbReference type="PDBsum" id="4ZFB"/>
<dbReference type="PDBsum" id="5B2U"/>
<dbReference type="PDBsum" id="5B2V"/>
<dbReference type="PDBsum" id="5B2W"/>
<dbReference type="PDBsum" id="5B2X"/>
<dbReference type="PDBsum" id="5B2Y"/>
<dbReference type="PDBsum" id="5DYP"/>
<dbReference type="PDBsum" id="5DYZ"/>
<dbReference type="PDBsum" id="5E78"/>
<dbReference type="PDBsum" id="5E7Y"/>
<dbReference type="PDBsum" id="5E9Z"/>
<dbReference type="PDBsum" id="5JQ2"/>
<dbReference type="PDBsum" id="5JQU"/>
<dbReference type="PDBsum" id="5JQV"/>
<dbReference type="PDBsum" id="5JTD"/>
<dbReference type="PDBsum" id="5OG9"/>
<dbReference type="PDBsum" id="5UCW"/>
<dbReference type="PDBsum" id="5XA3"/>
<dbReference type="PDBsum" id="5XHJ"/>
<dbReference type="PDBsum" id="5ZIS"/>
<dbReference type="PDBsum" id="5ZLH"/>
<dbReference type="PDBsum" id="6H1O"/>
<dbReference type="PDBsum" id="6H1S"/>
<dbReference type="PDBsum" id="6HN8"/>
<dbReference type="PDBsum" id="6IAO"/>
<dbReference type="PDBsum" id="6JLV"/>
<dbReference type="PDBsum" id="6JMH"/>
<dbReference type="PDBsum" id="6JMW"/>
<dbReference type="PDBsum" id="6JO1"/>
<dbReference type="PDBsum" id="6JS8"/>
<dbReference type="PDBsum" id="6JVC"/>
<dbReference type="PDBsum" id="6JZS"/>
<dbReference type="PDBsum" id="6K24"/>
<dbReference type="PDBsum" id="6K3Q"/>
<dbReference type="PDBsum" id="6K58"/>
<dbReference type="PDBsum" id="6K9S"/>
<dbReference type="PDBsum" id="6L1A"/>
<dbReference type="PDBsum" id="6L1B"/>
<dbReference type="PDBsum" id="6LY4"/>
<dbReference type="PDBsum" id="7CKN"/>
<dbReference type="PDBsum" id="7CON"/>
<dbReference type="PDBsum" id="7COO"/>
<dbReference type="PDBsum" id="7CP8"/>
<dbReference type="PDBsum" id="7CVR"/>
<dbReference type="PDBsum" id="7CX6"/>
<dbReference type="PDBsum" id="7CX8"/>
<dbReference type="PDBsum" id="7CZI"/>
<dbReference type="PDBsum" id="7D0T"/>
<dbReference type="PDBsum" id="7D0U"/>
<dbReference type="PDBsum" id="7D1F"/>
<dbReference type="PDBsum" id="7E46"/>
<dbReference type="PDBsum" id="7EGN"/>
<dbReference type="PDBsum" id="7W97"/>
<dbReference type="PDBsum" id="7W9D"/>
<dbReference type="PDBsum" id="7W9J"/>
<dbReference type="PDBsum" id="7WDD"/>
<dbReference type="PDBsum" id="7WDE"/>
<dbReference type="PDBsum" id="7WDG"/>
<dbReference type="PDBsum" id="7WDH"/>
<dbReference type="PDBsum" id="7WDI"/>
<dbReference type="PDBsum" id="7WG0"/>
<dbReference type="PDBsum" id="7WY1"/>
<dbReference type="PDBsum" id="7WY2"/>
<dbReference type="PDBsum" id="7WY3"/>
<dbReference type="PDBsum" id="7WY4"/>
<dbReference type="PDBsum" id="7XZK"/>
<dbReference type="PDBsum" id="7Y0P"/>
<dbReference type="PDBsum" id="7Y0Q"/>
<dbReference type="PDBsum" id="7Y0R"/>
<dbReference type="PDBsum" id="7Y0S"/>
<dbReference type="PDBsum" id="7Y0T"/>
<dbReference type="PDBsum" id="7Y0U"/>
<dbReference type="PDBsum" id="7Y9J"/>
<dbReference type="PDBsum" id="7Y9K"/>
<dbReference type="PDBsum" id="7Y9L"/>
<dbReference type="PDBsum" id="7Y9M"/>
<dbReference type="PDBsum" id="7YD9"/>
<dbReference type="PDBsum" id="7YDA"/>
<dbReference type="PDBsum" id="7YDB"/>
<dbReference type="PDBsum" id="7YDC"/>
<dbReference type="PDBsum" id="7YDD"/>
<dbReference type="PDBsum" id="7YDE"/>
<dbReference type="PDBsum" id="7YDL"/>
<dbReference type="PDBsum" id="7YFT"/>
<dbReference type="PDBsum" id="7YJD"/>
<dbReference type="PDBsum" id="7YJE"/>
<dbReference type="PDBsum" id="7YJF"/>
<dbReference type="PDBsum" id="7YJG"/>
<dbReference type="PDBsum" id="7YJH"/>
<dbReference type="PDBsum" id="8DME"/>
<dbReference type="PDBsum" id="8DMG"/>
<dbReference type="PDBsum" id="8DSG"/>
<dbReference type="PDBsum" id="8HON"/>
<dbReference type="PDBsum" id="8HOO"/>
<dbReference type="PDBsum" id="8HOP"/>
<dbReference type="PDBsum" id="8HOQ"/>
<dbReference type="PDBsum" id="8HOR"/>
<dbReference type="PDBsum" id="8HOS"/>
<dbReference type="PDBsum" id="8HOT"/>
<dbReference type="PDBsum" id="8HOU"/>
<dbReference type="PDBsum" id="8JC3"/>
<dbReference type="PDBsum" id="8JC4"/>
<dbReference type="PDBsum" id="8Q2F"/>
<dbReference type="PDBsum" id="8QZE"/>
<dbReference type="PDBsum" id="8QZF"/>
<dbReference type="PDBsum" id="8YAY"/>
<dbReference type="PDBsum" id="8YAZ"/>
<dbReference type="PDBsum" id="8YB0"/>
<dbReference type="PDBsum" id="8YB1"/>
<dbReference type="PDBsum" id="8YB2"/>
<dbReference type="PDBsum" id="8YB3"/>
<dbReference type="PDBsum" id="9ISS"/>
<dbReference type="PDBsum" id="9IST"/>
<dbReference type="PDBsum" id="9ISU"/>
<dbReference type="EMDB" id="EMD-27534"/>
<dbReference type="EMDB" id="EMD-27536"/>
<dbReference type="SMR" id="P14779"/>
<dbReference type="MINT" id="P14779"/>
<dbReference type="BindingDB" id="P14779"/>
<dbReference type="ChEMBL" id="CHEMBL4630872"/>
<dbReference type="DrugBank" id="DB08086">
    <property type="generic name" value="N-[12-(1H-imidazol-1-yl)dodecanoyl]-L-leucine"/>
</dbReference>
<dbReference type="DrugBank" id="DB03440">
    <property type="generic name" value="N-hexadecanoylglycine"/>
</dbReference>
<dbReference type="DrugBank" id="DB04257">
    <property type="generic name" value="Palmitoleic Acid"/>
</dbReference>
<dbReference type="GeneID" id="93643681"/>
<dbReference type="KEGG" id="bmeg:BG04_163"/>
<dbReference type="HOGENOM" id="CLU_001570_7_0_9"/>
<dbReference type="BioCyc" id="MetaCyc:MONOMER-17698"/>
<dbReference type="BRENDA" id="1.1.1.B57">
    <property type="organism ID" value="656"/>
</dbReference>
<dbReference type="BRENDA" id="1.14.14.1">
    <property type="organism ID" value="656"/>
</dbReference>
<dbReference type="BRENDA" id="1.6.2.4">
    <property type="organism ID" value="656"/>
</dbReference>
<dbReference type="SABIO-RK" id="P14779"/>
<dbReference type="EvolutionaryTrace" id="P14779"/>
<dbReference type="Proteomes" id="UP000031829">
    <property type="component" value="Chromosome"/>
</dbReference>
<dbReference type="GO" id="GO:0005829">
    <property type="term" value="C:cytosol"/>
    <property type="evidence" value="ECO:0007669"/>
    <property type="project" value="TreeGrafter"/>
</dbReference>
<dbReference type="GO" id="GO:0070330">
    <property type="term" value="F:aromatase activity"/>
    <property type="evidence" value="ECO:0000314"/>
    <property type="project" value="UniProtKB"/>
</dbReference>
<dbReference type="GO" id="GO:0050660">
    <property type="term" value="F:flavin adenine dinucleotide binding"/>
    <property type="evidence" value="ECO:0007669"/>
    <property type="project" value="TreeGrafter"/>
</dbReference>
<dbReference type="GO" id="GO:0010181">
    <property type="term" value="F:FMN binding"/>
    <property type="evidence" value="ECO:0007669"/>
    <property type="project" value="InterPro"/>
</dbReference>
<dbReference type="GO" id="GO:0020037">
    <property type="term" value="F:heme binding"/>
    <property type="evidence" value="ECO:0007669"/>
    <property type="project" value="InterPro"/>
</dbReference>
<dbReference type="GO" id="GO:0042802">
    <property type="term" value="F:identical protein binding"/>
    <property type="evidence" value="ECO:0000353"/>
    <property type="project" value="IntAct"/>
</dbReference>
<dbReference type="GO" id="GO:0005506">
    <property type="term" value="F:iron ion binding"/>
    <property type="evidence" value="ECO:0000314"/>
    <property type="project" value="UniProtKB"/>
</dbReference>
<dbReference type="GO" id="GO:0003958">
    <property type="term" value="F:NADPH-hemoprotein reductase activity"/>
    <property type="evidence" value="ECO:0000314"/>
    <property type="project" value="UniProtKB"/>
</dbReference>
<dbReference type="GO" id="GO:0016712">
    <property type="term" value="F:oxidoreductase activity, acting on paired donors, with incorporation or reduction of molecular oxygen, reduced flavin or flavoprotein as one donor, and incorporation of one atom of oxygen"/>
    <property type="evidence" value="ECO:0000314"/>
    <property type="project" value="UniProtKB"/>
</dbReference>
<dbReference type="CDD" id="cd06206">
    <property type="entry name" value="bifunctional_CYPOR"/>
    <property type="match status" value="1"/>
</dbReference>
<dbReference type="CDD" id="cd11068">
    <property type="entry name" value="CYP120A1"/>
    <property type="match status" value="1"/>
</dbReference>
<dbReference type="FunFam" id="1.10.630.10:FF:000040">
    <property type="entry name" value="Bifunctional cytochrome P450/NADPH--P450 reductase"/>
    <property type="match status" value="1"/>
</dbReference>
<dbReference type="FunFam" id="1.20.990.10:FF:000011">
    <property type="entry name" value="Bifunctional cytochrome P450/NADPH--P450 reductase"/>
    <property type="match status" value="1"/>
</dbReference>
<dbReference type="FunFam" id="3.40.50.360:FF:000048">
    <property type="entry name" value="Bifunctional cytochrome P450/NADPH--P450 reductase"/>
    <property type="match status" value="1"/>
</dbReference>
<dbReference type="FunFam" id="3.40.50.80:FF:000031">
    <property type="entry name" value="Bifunctional cytochrome P450/NADPH--P450 reductase"/>
    <property type="match status" value="1"/>
</dbReference>
<dbReference type="Gene3D" id="3.40.50.360">
    <property type="match status" value="1"/>
</dbReference>
<dbReference type="Gene3D" id="1.10.630.10">
    <property type="entry name" value="Cytochrome P450"/>
    <property type="match status" value="1"/>
</dbReference>
<dbReference type="Gene3D" id="1.20.990.10">
    <property type="entry name" value="NADPH-cytochrome p450 Reductase, Chain A, domain 3"/>
    <property type="match status" value="1"/>
</dbReference>
<dbReference type="Gene3D" id="3.40.50.80">
    <property type="entry name" value="Nucleotide-binding domain of ferredoxin-NADP reductase (FNR) module"/>
    <property type="match status" value="1"/>
</dbReference>
<dbReference type="Gene3D" id="2.40.30.10">
    <property type="entry name" value="Translation factors"/>
    <property type="match status" value="1"/>
</dbReference>
<dbReference type="InterPro" id="IPR023206">
    <property type="entry name" value="Bifunctional_P450_P450_red"/>
</dbReference>
<dbReference type="InterPro" id="IPR003097">
    <property type="entry name" value="CysJ-like_FAD-binding"/>
</dbReference>
<dbReference type="InterPro" id="IPR001128">
    <property type="entry name" value="Cyt_P450"/>
</dbReference>
<dbReference type="InterPro" id="IPR017972">
    <property type="entry name" value="Cyt_P450_CS"/>
</dbReference>
<dbReference type="InterPro" id="IPR036396">
    <property type="entry name" value="Cyt_P450_sf"/>
</dbReference>
<dbReference type="InterPro" id="IPR017927">
    <property type="entry name" value="FAD-bd_FR_type"/>
</dbReference>
<dbReference type="InterPro" id="IPR001094">
    <property type="entry name" value="Flavdoxin-like"/>
</dbReference>
<dbReference type="InterPro" id="IPR008254">
    <property type="entry name" value="Flavodoxin/NO_synth"/>
</dbReference>
<dbReference type="InterPro" id="IPR001709">
    <property type="entry name" value="Flavoprot_Pyr_Nucl_cyt_Rdtase"/>
</dbReference>
<dbReference type="InterPro" id="IPR029039">
    <property type="entry name" value="Flavoprotein-like_sf"/>
</dbReference>
<dbReference type="InterPro" id="IPR039261">
    <property type="entry name" value="FNR_nucleotide-bd"/>
</dbReference>
<dbReference type="InterPro" id="IPR023173">
    <property type="entry name" value="NADPH_Cyt_P450_Rdtase_alpha"/>
</dbReference>
<dbReference type="InterPro" id="IPR001433">
    <property type="entry name" value="OxRdtase_FAD/NAD-bd"/>
</dbReference>
<dbReference type="InterPro" id="IPR017938">
    <property type="entry name" value="Riboflavin_synthase-like_b-brl"/>
</dbReference>
<dbReference type="PANTHER" id="PTHR19384:SF17">
    <property type="entry name" value="NADPH--CYTOCHROME P450 REDUCTASE"/>
    <property type="match status" value="1"/>
</dbReference>
<dbReference type="PANTHER" id="PTHR19384">
    <property type="entry name" value="NITRIC OXIDE SYNTHASE-RELATED"/>
    <property type="match status" value="1"/>
</dbReference>
<dbReference type="Pfam" id="PF00667">
    <property type="entry name" value="FAD_binding_1"/>
    <property type="match status" value="1"/>
</dbReference>
<dbReference type="Pfam" id="PF00258">
    <property type="entry name" value="Flavodoxin_1"/>
    <property type="match status" value="1"/>
</dbReference>
<dbReference type="Pfam" id="PF00175">
    <property type="entry name" value="NAD_binding_1"/>
    <property type="match status" value="1"/>
</dbReference>
<dbReference type="Pfam" id="PF00067">
    <property type="entry name" value="p450"/>
    <property type="match status" value="1"/>
</dbReference>
<dbReference type="PIRSF" id="PIRSF000209">
    <property type="entry name" value="Bifunctional_P450_P450R"/>
    <property type="match status" value="1"/>
</dbReference>
<dbReference type="PRINTS" id="PR00369">
    <property type="entry name" value="FLAVODOXIN"/>
</dbReference>
<dbReference type="PRINTS" id="PR00371">
    <property type="entry name" value="FPNCR"/>
</dbReference>
<dbReference type="SUPFAM" id="SSF48264">
    <property type="entry name" value="Cytochrome P450"/>
    <property type="match status" value="1"/>
</dbReference>
<dbReference type="SUPFAM" id="SSF52343">
    <property type="entry name" value="Ferredoxin reductase-like, C-terminal NADP-linked domain"/>
    <property type="match status" value="1"/>
</dbReference>
<dbReference type="SUPFAM" id="SSF52218">
    <property type="entry name" value="Flavoproteins"/>
    <property type="match status" value="1"/>
</dbReference>
<dbReference type="SUPFAM" id="SSF63380">
    <property type="entry name" value="Riboflavin synthase domain-like"/>
    <property type="match status" value="1"/>
</dbReference>
<dbReference type="PROSITE" id="PS00086">
    <property type="entry name" value="CYTOCHROME_P450"/>
    <property type="match status" value="1"/>
</dbReference>
<dbReference type="PROSITE" id="PS51384">
    <property type="entry name" value="FAD_FR"/>
    <property type="match status" value="1"/>
</dbReference>
<dbReference type="PROSITE" id="PS50902">
    <property type="entry name" value="FLAVODOXIN_LIKE"/>
    <property type="match status" value="1"/>
</dbReference>
<feature type="chain" id="PRO_0000052205" description="Bifunctional cytochrome P450/NADPH--P450 reductase">
    <location>
        <begin position="1"/>
        <end position="1049"/>
    </location>
</feature>
<feature type="domain" description="Flavodoxin-like" evidence="2">
    <location>
        <begin position="483"/>
        <end position="622"/>
    </location>
</feature>
<feature type="domain" description="FAD-binding FR-type" evidence="3">
    <location>
        <begin position="660"/>
        <end position="892"/>
    </location>
</feature>
<feature type="region of interest" description="Cytochrome P450">
    <location>
        <begin position="2"/>
        <end position="472"/>
    </location>
</feature>
<feature type="region of interest" description="NADPH--P450 reductase">
    <location>
        <begin position="473"/>
        <end position="1049"/>
    </location>
</feature>
<feature type="binding site" evidence="8 54">
    <location>
        <position position="52"/>
    </location>
    <ligand>
        <name>(9Z)-hexadecenoate</name>
        <dbReference type="ChEBI" id="CHEBI:32372"/>
    </ligand>
</feature>
<feature type="binding site" description="axial binding residue" evidence="4 5 6 7 8 9 11 13 15 16 17 19 20 21 22 23 24 25 26 28 29 30 44 45 46 47 48 49 50 51 52 53 54 55 56 57 58 59 60 61 62 63 64 65 66 67 68 69 70 71 72 73 74 75 76 77 78">
    <location>
        <position position="401"/>
    </location>
    <ligand>
        <name>heme</name>
        <dbReference type="ChEBI" id="CHEBI:30413"/>
    </ligand>
    <ligandPart>
        <name>Fe</name>
        <dbReference type="ChEBI" id="CHEBI:18248"/>
    </ligandPart>
</feature>
<feature type="binding site" evidence="4 45">
    <location>
        <begin position="489"/>
        <end position="494"/>
    </location>
    <ligand>
        <name>FMN</name>
        <dbReference type="ChEBI" id="CHEBI:58210"/>
    </ligand>
</feature>
<feature type="binding site" evidence="4 45">
    <location>
        <begin position="536"/>
        <end position="539"/>
    </location>
    <ligand>
        <name>FMN</name>
        <dbReference type="ChEBI" id="CHEBI:58210"/>
    </ligand>
</feature>
<feature type="binding site" evidence="4 45">
    <location>
        <begin position="570"/>
        <end position="572"/>
    </location>
    <ligand>
        <name>FMN</name>
        <dbReference type="ChEBI" id="CHEBI:58210"/>
    </ligand>
</feature>
<feature type="binding site" evidence="4 45">
    <location>
        <begin position="578"/>
        <end position="580"/>
    </location>
    <ligand>
        <name>FMN</name>
        <dbReference type="ChEBI" id="CHEBI:58210"/>
    </ligand>
</feature>
<feature type="site" description="Important for catalytic activity" evidence="39 40">
    <location>
        <position position="269"/>
    </location>
</feature>
<feature type="mutagenesis site" description="2-3-fold decrease in binding affinity for N-myristoyl-L-methionine as substrate." evidence="17">
    <original>R</original>
    <variation>Q</variation>
    <variation>S</variation>
    <location>
        <position position="48"/>
    </location>
</feature>
<feature type="mutagenesis site" description="Higher activity in the hydroxylation of highly branched fatty acids; when associated with V-88 and Q-189." evidence="12">
    <original>A</original>
    <variation>G</variation>
    <location>
        <position position="75"/>
    </location>
</feature>
<feature type="mutagenesis site" description="800-fold binding affinity for laurate as substrate. High coupling of NADPH consumption to laurate formation. Very much more effective in indole hydroxylation. Favors omega-2 hydroxylation. Significantly higher rates of NADPH consumption in the absence of substrate. No temperature-dependent shifts to low-spin in complex with palmitate." evidence="16">
    <original>A</original>
    <variation>F</variation>
    <location>
        <position position="83"/>
    </location>
</feature>
<feature type="mutagenesis site" description="No effect in binding affinity for laurate as substrate. High coupling of NADPH consumption to laurate formation. No indole hydroxylation. Favors omega-2 hydroxylation. Similarly to wild-type, shows significant shifts to low-spin in complex with palmitate as the temperature decreases." evidence="16">
    <original>A</original>
    <variation>I</variation>
    <location>
        <position position="83"/>
    </location>
</feature>
<feature type="mutagenesis site" description="800-fold binding affinity for laurate as substrate. Low coupling of NADPH consumption to laurate formation. Very much more effective in indole hydroxylation. Favors omega-1 hydroxylation. Significantly higher rates of NADPH consumption in the absence of substrate. No temperature-dependent shifts to low-spin in complex with palmitate." evidence="16">
    <original>A</original>
    <variation>W</variation>
    <location>
        <position position="83"/>
    </location>
</feature>
<feature type="mutagenesis site" description="Ineffective covalent modification of the heme macrocycle. Extensive formation of Fe(II)CO complex in the substrate-free form. Has more positive potential in both substrate-free and arachidonate-bound forms and some high-spin content in the ferric substrate-free form of the enzyme." evidence="23">
    <original>L</original>
    <variation>E</variation>
    <location>
        <position position="87"/>
    </location>
</feature>
<feature type="mutagenesis site" description="Higher activity in the hydroxylation of highly branched fatty acids; when associated with G-75 and Q-189." evidence="12">
    <original>F</original>
    <variation>V</variation>
    <location>
        <position position="88"/>
    </location>
</feature>
<feature type="mutagenesis site" description="Higher activity in the hydroxylation of highly branched fatty acids; when associated with G-75 and V-88." evidence="12">
    <original>L</original>
    <variation>Q</variation>
    <location>
        <position position="189"/>
    </location>
</feature>
<feature type="mutagenesis site" description="Ineffective covalent modification of the heme macrocycle. Substantially slower FMN to heme electron transfer for the arachidonate-bound enzyme. Product distribution biased towards omega-3." evidence="23">
    <original>F</original>
    <variation>E</variation>
    <location>
        <position position="262"/>
    </location>
</feature>
<feature type="mutagenesis site" description="No effective fatty acid oxidation. No effect on electron transport from NADPH to FMN. Substantially lower high-spin conversion with arachidonate and palmitoleate, and negligible change is observed with palmitate, myristate and laurate/dodecanoate. 20% of omega-1, omega-2 and omega-3 laurate/dodecanoate hydroxylation products." evidence="21">
    <original>A</original>
    <variation>C</variation>
    <location>
        <position position="265"/>
    </location>
</feature>
<feature type="mutagenesis site" description="No significant stimulation of NADPH oxidation induced by addition of fatty acids and no hydroxylated products, but cytochrome c reductase activity levels are identical to wild-type enzyme. More negative reduction potential with dithionite. Unable to form Fe(2+)CO complexes on reduction with dithionite and bubbling with carbon monoxide." evidence="13">
    <original>A</original>
    <variation>H</variation>
    <variation>K</variation>
    <location>
        <position position="265"/>
    </location>
</feature>
<feature type="mutagenesis site" description="No effective fatty acid oxidation. No effect on electron transport from NADPH to FMN. Slightly lower high-spin conversion with arachidonate, palmitoleate, palmitate, myristate and laurate/dodecanoate. 5% of omega-1, omega-2 and omega-3 laurate/dodecanoate hydroxylation products." evidence="21">
    <original>A</original>
    <variation>M</variation>
    <location>
        <position position="265"/>
    </location>
</feature>
<feature type="mutagenesis site" description="No effective fatty acid oxidation. No effect on electron transport from NADPH to FMN. Nearly wild-type level of high-spin conversion with laurate/dodecanoate, palmitoleate and arachidonate. 5% of omega-1, omega-2 and omega-3 laurate/dodecanoate hydroxylation products." evidence="21">
    <original>A</original>
    <variation>Q</variation>
    <location>
        <position position="265"/>
    </location>
</feature>
<feature type="mutagenesis site" description="Contrary to wild-type, significant decrease in the formation of the high-spin complex via substrate binding, and decreased substrate-induced reduction potential shift with saturating concentrations of arachidonate; when associated with H-394. Considerably lower proportion of high-spin protein and decreased substrate-induced heme reduction-potential shift on addition of saturating concentrations of arachidonate. Leads to destabilization of the oxy-ferrous complex. Exhibits slower rates of O(2) and NADPH consumption using sodium laurate as the substrate. Greater production of water and peroxide compared to wild-type indicating uncoupled electron transfer from sodium laurate hydroxylation. Only 16% yield of product after 5 minutes of reaction relative to the amount of NADPH used compared to 100% of wild-type." evidence="11 28">
    <original>T</original>
    <variation>A</variation>
    <location>
        <position position="269"/>
    </location>
</feature>
<feature type="mutagenesis site" description="High substrate-free turnover rate constant. Negligible substrate-induced spin-state and substrate-induced heme reduction-potential shifts on addition of saturating concentrations of arachidonate. Induces a positive shift in the substrate-free heme reduction potential. 10-fold greater rate constants for the first electron transfer in the absence of substrate; when associated with H-394. Turnover rate constants diminished. Significantly smaller degrees of coupling to product. Negligible amounts of high-spin protein on addition of saturating concentration of arachidonate. Negligible substrate-induced spin-state and substrate-induced heme reduction-potential shifts on addition of saturating concentrations of arachidonate. Induces a 60 mV positive shift in the substrate-free heme reduction potential. The apparent rate constant for heme reduction is smaller than the overall turnover rate constant. Leads to destabilization of the oxy-ferrous complex." evidence="11">
    <original>T</original>
    <variation>N</variation>
    <location>
        <position position="269"/>
    </location>
</feature>
<feature type="mutagenesis site" description="Substrate binding affinity increases 5-10 fold and the turnover number increases 2-8-fold for palmitate as substrate compared to the wild-type. Has a very different product distribution favoring greatly oxidation at the omega-1 position and shows almost no oxidation at the omega-3 position." evidence="26">
    <original>A</original>
    <variation>V</variation>
    <location>
        <position position="329"/>
    </location>
</feature>
<feature type="mutagenesis site" description="Enhanced activity with small non-natural substrates with altered product profiles compared to wild-type." evidence="25">
    <original>A</original>
    <variation>P</variation>
    <location>
        <position position="331"/>
    </location>
</feature>
<feature type="mutagenesis site" description="High substrate-free turnover rate constant. Negligible substrate-induced spin-state and substrate-induced heme reduction-potential shifts on addition of saturating concentrations of arachidonate. Induces a positive shift in the substrate-free heme reduction potential. 10-fold greater rate constants for the first electron transfer in the absence of substrate; when associated with N-269. Significant decrease in the formation of the high-spin complex via substrate binding, and decreased substrate-induced reduction potential shift with saturating concentrations of arachidonate; when associated with A-269. No change in product profile using myristate as substrate, but slightly higher amount of unreacted myristate indicating lower overall catalytic activity relative to wild-type." evidence="5 11">
    <original>F</original>
    <variation>H</variation>
    <location>
        <position position="394"/>
    </location>
</feature>
<feature type="mutagenesis site" description="Large decrease in the heme reduction potential in the presence and absence of substrate arachidonate. 10% reduction in efficiency to couple NADPH consumption to substrate monooxygenation. Half of the turn over rate and four times faster decay of the oxy-ferrous complex to the ferric form than that of wild-type." evidence="7">
    <original>F</original>
    <variation>W</variation>
    <location>
        <position position="394"/>
    </location>
</feature>
<feature type="mutagenesis site" description="Ineffective covalent modification of the heme macrocycle. 2-fold apparent limiting rate of flavin to heme electron transfer for arachidonate-bound enzyme. Substrate-free enzyme is converted rapidly and completely into its Fe(II)CO complex and has much more positive potential. 8-fold decrease in overall catalytic rate with arachidonic acid. More efficient NADPH oxidase in absence of fatty acids. Product distribution biased towards omega-1." evidence="23">
    <original>I</original>
    <variation>E</variation>
    <location>
        <position position="402"/>
    </location>
</feature>
<feature type="mutagenesis site" description="10-fold increase in binding affinity for lauric acid. Catalytic activity rates accelerate across a range of hydrophobic non-natural substrates, including (+)-alpha-pinene, fluorene, 3-methylpentane and propylbenzene, while product distributions of them are broadly similar to the wild-type enzyme exept for (+)-alpha-pinene which is not metabolized by wild-type." evidence="22">
    <original>I</original>
    <variation>P</variation>
    <location>
        <position position="402"/>
    </location>
</feature>
<feature type="helix" evidence="80">
    <location>
        <begin position="13"/>
        <end position="15"/>
    </location>
</feature>
<feature type="helix" evidence="80">
    <location>
        <begin position="18"/>
        <end position="21"/>
    </location>
</feature>
<feature type="strand" evidence="89">
    <location>
        <begin position="22"/>
        <end position="24"/>
    </location>
</feature>
<feature type="helix" evidence="80">
    <location>
        <begin position="26"/>
        <end position="37"/>
    </location>
</feature>
<feature type="strand" evidence="80">
    <location>
        <begin position="39"/>
        <end position="45"/>
    </location>
</feature>
<feature type="strand" evidence="80">
    <location>
        <begin position="48"/>
        <end position="53"/>
    </location>
</feature>
<feature type="helix" evidence="80">
    <location>
        <begin position="56"/>
        <end position="62"/>
    </location>
</feature>
<feature type="turn" evidence="80">
    <location>
        <begin position="65"/>
        <end position="67"/>
    </location>
</feature>
<feature type="strand" evidence="80">
    <location>
        <begin position="68"/>
        <end position="70"/>
    </location>
</feature>
<feature type="helix" evidence="80">
    <location>
        <begin position="74"/>
        <end position="83"/>
    </location>
</feature>
<feature type="helix" evidence="80">
    <location>
        <begin position="87"/>
        <end position="89"/>
    </location>
</feature>
<feature type="strand" evidence="86">
    <location>
        <begin position="92"/>
        <end position="94"/>
    </location>
</feature>
<feature type="helix" evidence="80">
    <location>
        <begin position="95"/>
        <end position="104"/>
    </location>
</feature>
<feature type="helix" evidence="80">
    <location>
        <begin position="105"/>
        <end position="108"/>
    </location>
</feature>
<feature type="turn" evidence="80">
    <location>
        <begin position="110"/>
        <end position="112"/>
    </location>
</feature>
<feature type="helix" evidence="80">
    <location>
        <begin position="113"/>
        <end position="132"/>
    </location>
</feature>
<feature type="helix" evidence="80">
    <location>
        <begin position="142"/>
        <end position="159"/>
    </location>
</feature>
<feature type="helix" evidence="80">
    <location>
        <begin position="165"/>
        <end position="167"/>
    </location>
</feature>
<feature type="strand" evidence="87">
    <location>
        <begin position="169"/>
        <end position="171"/>
    </location>
</feature>
<feature type="helix" evidence="80">
    <location>
        <begin position="173"/>
        <end position="187"/>
    </location>
</feature>
<feature type="helix" evidence="88">
    <location>
        <begin position="188"/>
        <end position="190"/>
    </location>
</feature>
<feature type="strand" evidence="83">
    <location>
        <begin position="192"/>
        <end position="194"/>
    </location>
</feature>
<feature type="helix" evidence="80">
    <location>
        <begin position="197"/>
        <end position="199"/>
    </location>
</feature>
<feature type="helix" evidence="80">
    <location>
        <begin position="200"/>
        <end position="227"/>
    </location>
</feature>
<feature type="helix" evidence="80">
    <location>
        <begin position="234"/>
        <end position="240"/>
    </location>
</feature>
<feature type="turn" evidence="80">
    <location>
        <begin position="244"/>
        <end position="246"/>
    </location>
</feature>
<feature type="helix" evidence="80">
    <location>
        <begin position="252"/>
        <end position="283"/>
    </location>
</feature>
<feature type="helix" evidence="80">
    <location>
        <begin position="285"/>
        <end position="298"/>
    </location>
</feature>
<feature type="strand" evidence="80">
    <location>
        <begin position="301"/>
        <end position="303"/>
    </location>
</feature>
<feature type="helix" evidence="80">
    <location>
        <begin position="306"/>
        <end position="310"/>
    </location>
</feature>
<feature type="helix" evidence="80">
    <location>
        <begin position="313"/>
        <end position="325"/>
    </location>
</feature>
<feature type="strand" evidence="80">
    <location>
        <begin position="331"/>
        <end position="338"/>
    </location>
</feature>
<feature type="strand" evidence="80">
    <location>
        <begin position="340"/>
        <end position="342"/>
    </location>
</feature>
<feature type="turn" evidence="80">
    <location>
        <begin position="343"/>
        <end position="345"/>
    </location>
</feature>
<feature type="strand" evidence="80">
    <location>
        <begin position="346"/>
        <end position="348"/>
    </location>
</feature>
<feature type="strand" evidence="80">
    <location>
        <begin position="353"/>
        <end position="357"/>
    </location>
</feature>
<feature type="helix" evidence="80">
    <location>
        <begin position="358"/>
        <end position="361"/>
    </location>
</feature>
<feature type="helix" evidence="80">
    <location>
        <begin position="365"/>
        <end position="368"/>
    </location>
</feature>
<feature type="turn" evidence="88">
    <location>
        <begin position="370"/>
        <end position="373"/>
    </location>
</feature>
<feature type="helix" evidence="80">
    <location>
        <begin position="377"/>
        <end position="380"/>
    </location>
</feature>
<feature type="helix" evidence="80">
    <location>
        <begin position="383"/>
        <end position="385"/>
    </location>
</feature>
<feature type="strand" evidence="85">
    <location>
        <begin position="388"/>
        <end position="390"/>
    </location>
</feature>
<feature type="helix" evidence="80">
    <location>
        <begin position="397"/>
        <end position="399"/>
    </location>
</feature>
<feature type="helix" evidence="80">
    <location>
        <begin position="404"/>
        <end position="421"/>
    </location>
</feature>
<feature type="strand" evidence="80">
    <location>
        <begin position="422"/>
        <end position="425"/>
    </location>
</feature>
<feature type="strand" evidence="80">
    <location>
        <begin position="434"/>
        <end position="442"/>
    </location>
</feature>
<feature type="strand" evidence="80">
    <location>
        <begin position="446"/>
        <end position="451"/>
    </location>
</feature>
<feature type="helix" evidence="84">
    <location>
        <begin position="462"/>
        <end position="464"/>
    </location>
</feature>
<feature type="strand" evidence="79">
    <location>
        <begin position="483"/>
        <end position="488"/>
    </location>
</feature>
<feature type="strand" evidence="79">
    <location>
        <begin position="490"/>
        <end position="492"/>
    </location>
</feature>
<feature type="helix" evidence="79">
    <location>
        <begin position="493"/>
        <end position="506"/>
    </location>
</feature>
<feature type="turn" evidence="79">
    <location>
        <begin position="507"/>
        <end position="509"/>
    </location>
</feature>
<feature type="strand" evidence="79">
    <location>
        <begin position="513"/>
        <end position="516"/>
    </location>
</feature>
<feature type="helix" evidence="79">
    <location>
        <begin position="517"/>
        <end position="519"/>
    </location>
</feature>
<feature type="strand" evidence="79">
    <location>
        <begin position="526"/>
        <end position="534"/>
    </location>
</feature>
<feature type="turn" evidence="79">
    <location>
        <begin position="543"/>
        <end position="545"/>
    </location>
</feature>
<feature type="helix" evidence="79">
    <location>
        <begin position="546"/>
        <end position="553"/>
    </location>
</feature>
<feature type="strand" evidence="79">
    <location>
        <begin position="565"/>
        <end position="571"/>
    </location>
</feature>
<feature type="helix" evidence="79">
    <location>
        <begin position="576"/>
        <end position="578"/>
    </location>
</feature>
<feature type="helix" evidence="79">
    <location>
        <begin position="581"/>
        <end position="591"/>
    </location>
</feature>
<feature type="turn" evidence="79">
    <location>
        <begin position="592"/>
        <end position="594"/>
    </location>
</feature>
<feature type="strand" evidence="79">
    <location>
        <begin position="599"/>
        <end position="605"/>
    </location>
</feature>
<feature type="helix" evidence="79">
    <location>
        <begin position="610"/>
        <end position="628"/>
    </location>
</feature>
<feature type="strand" evidence="82">
    <location>
        <begin position="663"/>
        <end position="672"/>
    </location>
</feature>
<feature type="strand" evidence="82">
    <location>
        <begin position="682"/>
        <end position="688"/>
    </location>
</feature>
<feature type="strand" evidence="82">
    <location>
        <begin position="700"/>
        <end position="703"/>
    </location>
</feature>
<feature type="helix" evidence="82">
    <location>
        <begin position="709"/>
        <end position="719"/>
    </location>
</feature>
<feature type="strand" evidence="81">
    <location>
        <begin position="726"/>
        <end position="729"/>
    </location>
</feature>
<feature type="strand" evidence="81">
    <location>
        <begin position="741"/>
        <end position="746"/>
    </location>
</feature>
<feature type="helix" evidence="82">
    <location>
        <begin position="747"/>
        <end position="750"/>
    </location>
</feature>
<feature type="helix" evidence="81">
    <location>
        <begin position="751"/>
        <end position="753"/>
    </location>
</feature>
<feature type="strand" evidence="82">
    <location>
        <begin position="756"/>
        <end position="759"/>
    </location>
</feature>
<feature type="helix" evidence="82">
    <location>
        <begin position="762"/>
        <end position="770"/>
    </location>
</feature>
<feature type="helix" evidence="82">
    <location>
        <begin position="775"/>
        <end position="783"/>
    </location>
</feature>
<feature type="helix" evidence="82">
    <location>
        <begin position="787"/>
        <end position="793"/>
    </location>
</feature>
<feature type="turn" evidence="82">
    <location>
        <begin position="794"/>
        <end position="798"/>
    </location>
</feature>
<feature type="helix" evidence="82">
    <location>
        <begin position="801"/>
        <end position="807"/>
    </location>
</feature>
<feature type="helix" evidence="82">
    <location>
        <begin position="815"/>
        <end position="820"/>
    </location>
</feature>
<feature type="strand" evidence="82">
    <location>
        <begin position="828"/>
        <end position="831"/>
    </location>
</feature>
<feature type="turn" evidence="82">
    <location>
        <begin position="836"/>
        <end position="838"/>
    </location>
</feature>
<feature type="strand" evidence="82">
    <location>
        <begin position="842"/>
        <end position="848"/>
    </location>
</feature>
<feature type="strand" evidence="82">
    <location>
        <begin position="851"/>
        <end position="853"/>
    </location>
</feature>
<feature type="strand" evidence="82">
    <location>
        <begin position="857"/>
        <end position="862"/>
    </location>
</feature>
<feature type="helix" evidence="82">
    <location>
        <begin position="864"/>
        <end position="871"/>
    </location>
</feature>
<feature type="strand" evidence="82">
    <location>
        <begin position="877"/>
        <end position="883"/>
    </location>
</feature>
<feature type="strand" evidence="82">
    <location>
        <begin position="899"/>
        <end position="902"/>
    </location>
</feature>
<feature type="helix" evidence="82">
    <location>
        <begin position="905"/>
        <end position="908"/>
    </location>
</feature>
<feature type="helix" evidence="82">
    <location>
        <begin position="909"/>
        <end position="923"/>
    </location>
</feature>
<feature type="strand" evidence="82">
    <location>
        <begin position="931"/>
        <end position="938"/>
    </location>
</feature>
<feature type="turn" evidence="82">
    <location>
        <begin position="940"/>
        <end position="942"/>
    </location>
</feature>
<feature type="helix" evidence="82">
    <location>
        <begin position="947"/>
        <end position="955"/>
    </location>
</feature>
<feature type="strand" evidence="82">
    <location>
        <begin position="960"/>
        <end position="967"/>
    </location>
</feature>
<feature type="helix" evidence="82">
    <location>
        <begin position="976"/>
        <end position="982"/>
    </location>
</feature>
<feature type="helix" evidence="82">
    <location>
        <begin position="984"/>
        <end position="992"/>
    </location>
</feature>
<feature type="strand" evidence="82">
    <location>
        <begin position="996"/>
        <end position="1002"/>
    </location>
</feature>
<feature type="turn" evidence="82">
    <location>
        <begin position="1003"/>
        <end position="1005"/>
    </location>
</feature>
<feature type="helix" evidence="82">
    <location>
        <begin position="1006"/>
        <end position="1022"/>
    </location>
</feature>
<feature type="helix" evidence="82">
    <location>
        <begin position="1026"/>
        <end position="1038"/>
    </location>
</feature>
<feature type="strand" evidence="82">
    <location>
        <begin position="1042"/>
        <end position="1047"/>
    </location>
</feature>